<accession>P33897</accession>
<accession>Q6GTZ2</accession>
<organism>
    <name type="scientific">Homo sapiens</name>
    <name type="common">Human</name>
    <dbReference type="NCBI Taxonomy" id="9606"/>
    <lineage>
        <taxon>Eukaryota</taxon>
        <taxon>Metazoa</taxon>
        <taxon>Chordata</taxon>
        <taxon>Craniata</taxon>
        <taxon>Vertebrata</taxon>
        <taxon>Euteleostomi</taxon>
        <taxon>Mammalia</taxon>
        <taxon>Eutheria</taxon>
        <taxon>Euarchontoglires</taxon>
        <taxon>Primates</taxon>
        <taxon>Haplorrhini</taxon>
        <taxon>Catarrhini</taxon>
        <taxon>Hominidae</taxon>
        <taxon>Homo</taxon>
    </lineage>
</organism>
<comment type="function">
    <text evidence="2 15 20 23 25 27 32 35 36">ATP-dependent transporter of the ATP-binding cassette (ABC) family involved in the transport of very long chain fatty acid (VLCFA)-CoA from the cytosol to the peroxisome lumen (PubMed:11248239, PubMed:15682271, PubMed:16946495, PubMed:18757502, PubMed:21145416, PubMed:23671276, PubMed:29397936, PubMed:33500543). Coupled to the ATP-dependent transporter activity also has a fatty acyl-CoA thioesterase activity (ACOT) and hydrolyzes VLCFA-CoA into VLCFA prior their ATP-dependent transport into peroxisomes, the ACOT activity is essential during this transport process (PubMed:29397936, PubMed:33500543). Thus, plays a role in regulation of VLCFAs and energy metabolism namely, in the degradation and biosynthesis of fatty acids by beta-oxidation, mitochondrial function and microsomal fatty acid elongation (PubMed:21145416, PubMed:23671276). Involved in several processes; namely, controls the active myelination phase by negatively regulating the microsomal fatty acid elongation activity and may also play a role in axon and myelin maintenance. Also controls the cellular response to oxidative stress by regulating mitochondrial functions such as mitochondrial oxidative phosphorylation and depolarization. And finally controls the inflammatory response by positively regulating peroxisomal beta-oxidation of VLCFAs (By similarity).</text>
</comment>
<comment type="catalytic activity">
    <reaction evidence="35 36">
        <text>a very long-chain fatty acyl-CoA + H2O = a very long-chain fatty acid + CoA + H(+)</text>
        <dbReference type="Rhea" id="RHEA:67072"/>
        <dbReference type="ChEBI" id="CHEBI:15377"/>
        <dbReference type="ChEBI" id="CHEBI:15378"/>
        <dbReference type="ChEBI" id="CHEBI:57287"/>
        <dbReference type="ChEBI" id="CHEBI:58950"/>
        <dbReference type="ChEBI" id="CHEBI:138261"/>
    </reaction>
    <physiologicalReaction direction="left-to-right" evidence="60">
        <dbReference type="Rhea" id="RHEA:67073"/>
    </physiologicalReaction>
</comment>
<comment type="catalytic activity">
    <reaction evidence="15 35 36 56 58 59">
        <text>a very long-chain fatty acid(in) + ATP + H2O = a very long-chain fatty acid(out) + ADP + phosphate + H(+)</text>
        <dbReference type="Rhea" id="RHEA:67080"/>
        <dbReference type="ChEBI" id="CHEBI:15377"/>
        <dbReference type="ChEBI" id="CHEBI:15378"/>
        <dbReference type="ChEBI" id="CHEBI:30616"/>
        <dbReference type="ChEBI" id="CHEBI:43474"/>
        <dbReference type="ChEBI" id="CHEBI:58950"/>
        <dbReference type="ChEBI" id="CHEBI:456216"/>
    </reaction>
    <physiologicalReaction direction="left-to-right" evidence="60">
        <dbReference type="Rhea" id="RHEA:67081"/>
    </physiologicalReaction>
</comment>
<comment type="catalytic activity">
    <reaction evidence="36">
        <text>tetracosanoyl-CoA + H2O = tetracosanoate + CoA + H(+)</text>
        <dbReference type="Rhea" id="RHEA:40787"/>
        <dbReference type="ChEBI" id="CHEBI:15377"/>
        <dbReference type="ChEBI" id="CHEBI:15378"/>
        <dbReference type="ChEBI" id="CHEBI:31014"/>
        <dbReference type="ChEBI" id="CHEBI:57287"/>
        <dbReference type="ChEBI" id="CHEBI:65052"/>
    </reaction>
    <physiologicalReaction direction="left-to-right" evidence="60">
        <dbReference type="Rhea" id="RHEA:40788"/>
    </physiologicalReaction>
</comment>
<comment type="catalytic activity">
    <reaction evidence="58">
        <text>tetracosanoate(in) + ATP + H2O = tetracosanoate(out) + ADP + phosphate + H(+)</text>
        <dbReference type="Rhea" id="RHEA:67088"/>
        <dbReference type="ChEBI" id="CHEBI:15377"/>
        <dbReference type="ChEBI" id="CHEBI:15378"/>
        <dbReference type="ChEBI" id="CHEBI:30616"/>
        <dbReference type="ChEBI" id="CHEBI:31014"/>
        <dbReference type="ChEBI" id="CHEBI:43474"/>
        <dbReference type="ChEBI" id="CHEBI:456216"/>
    </reaction>
    <physiologicalReaction direction="left-to-right" evidence="60">
        <dbReference type="Rhea" id="RHEA:67089"/>
    </physiologicalReaction>
</comment>
<comment type="catalytic activity">
    <reaction evidence="36">
        <text>hexacosanoyl-CoA + H2O = hexacosanoate + CoA + H(+)</text>
        <dbReference type="Rhea" id="RHEA:40791"/>
        <dbReference type="ChEBI" id="CHEBI:15377"/>
        <dbReference type="ChEBI" id="CHEBI:15378"/>
        <dbReference type="ChEBI" id="CHEBI:31013"/>
        <dbReference type="ChEBI" id="CHEBI:57287"/>
        <dbReference type="ChEBI" id="CHEBI:64868"/>
    </reaction>
    <physiologicalReaction direction="left-to-right" evidence="60">
        <dbReference type="Rhea" id="RHEA:40792"/>
    </physiologicalReaction>
</comment>
<comment type="catalytic activity">
    <reaction evidence="58 59">
        <text>hexacosanoate(in) + ATP + H2O = hexacosanoate(out) + ADP + phosphate + H(+)</text>
        <dbReference type="Rhea" id="RHEA:67084"/>
        <dbReference type="ChEBI" id="CHEBI:15377"/>
        <dbReference type="ChEBI" id="CHEBI:15378"/>
        <dbReference type="ChEBI" id="CHEBI:30616"/>
        <dbReference type="ChEBI" id="CHEBI:31013"/>
        <dbReference type="ChEBI" id="CHEBI:43474"/>
        <dbReference type="ChEBI" id="CHEBI:456216"/>
    </reaction>
    <physiologicalReaction direction="left-to-right" evidence="58">
        <dbReference type="Rhea" id="RHEA:67085"/>
    </physiologicalReaction>
</comment>
<comment type="catalytic activity">
    <reaction evidence="36">
        <text>docosanoyl-CoA + H2O = docosanoate + CoA + H(+)</text>
        <dbReference type="Rhea" id="RHEA:40783"/>
        <dbReference type="ChEBI" id="CHEBI:15377"/>
        <dbReference type="ChEBI" id="CHEBI:15378"/>
        <dbReference type="ChEBI" id="CHEBI:23858"/>
        <dbReference type="ChEBI" id="CHEBI:57287"/>
        <dbReference type="ChEBI" id="CHEBI:65059"/>
    </reaction>
    <physiologicalReaction direction="left-to-right" evidence="60">
        <dbReference type="Rhea" id="RHEA:40784"/>
    </physiologicalReaction>
</comment>
<comment type="catalytic activity">
    <reaction evidence="59">
        <text>docosanoate(in) + ATP + H2O = docosanoate(out) + ADP + phosphate + H(+)</text>
        <dbReference type="Rhea" id="RHEA:67092"/>
        <dbReference type="ChEBI" id="CHEBI:15377"/>
        <dbReference type="ChEBI" id="CHEBI:15378"/>
        <dbReference type="ChEBI" id="CHEBI:23858"/>
        <dbReference type="ChEBI" id="CHEBI:30616"/>
        <dbReference type="ChEBI" id="CHEBI:43474"/>
        <dbReference type="ChEBI" id="CHEBI:456216"/>
    </reaction>
    <physiologicalReaction direction="left-to-right" evidence="59">
        <dbReference type="Rhea" id="RHEA:67093"/>
    </physiologicalReaction>
</comment>
<comment type="activity regulation">
    <text evidence="36">The cysteine-reactive reagent p-chloromercuribenzoic acid (pCMB) strongly decreased the ACOT activity. The serine esterase inhibitors phenylmethylsulfonyl fluoride (PMSF), diisopropylfluorophosphate (DFP) and bis-(4-nitrophenyl)phosphate (BNPP) moderately reduced the ACOT activity. The histidine-reacting reagent diethyl pyrocarbonate (DEPC) has no effect on the ACOT activity.</text>
</comment>
<comment type="subunit">
    <text evidence="1 10 11 13 24 57">Can form homodimers and heterodimers with ABCD2 and ABCD3. Dimerization is necessary to form an active transporter (Probable) (PubMed:10551832, PubMed:17609205). The minimal functional unit is a homodimer but the major oligomeric form in peroxisomal membrane is a homotetramer (By similarity). Forms heterotramers with ABCD2 (By similarity). Interacts with PEX19; facilitates ABCD1 insertion into the peroxisome membrane (PubMed:10704444, PubMed:10777694).</text>
</comment>
<comment type="interaction">
    <interactant intactId="EBI-81045">
        <id>P33897</id>
    </interactant>
    <interactant intactId="EBI-81045">
        <id>P33897</id>
        <label>ABCD1</label>
    </interactant>
    <organismsDiffer>false</organismsDiffer>
    <experiments>2</experiments>
</comment>
<comment type="interaction">
    <interactant intactId="EBI-81045">
        <id>P33897</id>
    </interactant>
    <interactant intactId="EBI-80992">
        <id>P28288</id>
        <label>ABCD3</label>
    </interactant>
    <organismsDiffer>false</organismsDiffer>
    <experiments>2</experiments>
</comment>
<comment type="interaction">
    <interactant intactId="EBI-81045">
        <id>P33897</id>
    </interactant>
    <interactant intactId="EBI-594747">
        <id>P40855</id>
        <label>PEX19</label>
    </interactant>
    <organismsDiffer>false</organismsDiffer>
    <experiments>3</experiments>
</comment>
<comment type="interaction">
    <interactant intactId="EBI-81045">
        <id>P33897</id>
    </interactant>
    <interactant intactId="EBI-81118">
        <id>P48410</id>
        <label>Abcd1</label>
    </interactant>
    <organismsDiffer>true</organismsDiffer>
    <experiments>2</experiments>
</comment>
<comment type="subcellular location">
    <subcellularLocation>
        <location evidence="13 23 24 25 35">Peroxisome membrane</location>
        <topology evidence="3">Multi-pass membrane protein</topology>
    </subcellularLocation>
    <subcellularLocation>
        <location evidence="23">Mitochondrion membrane</location>
        <topology>Multi-pass membrane protein</topology>
    </subcellularLocation>
    <subcellularLocation>
        <location evidence="23">Lysosome membrane</location>
        <topology>Multi-pass membrane protein</topology>
    </subcellularLocation>
    <subcellularLocation>
        <location evidence="23">Endoplasmic reticulum membrane</location>
        <topology>Multi-pass membrane protein</topology>
    </subcellularLocation>
</comment>
<comment type="induction">
    <text evidence="22">Up-regulated by degradation or export of cholesterol.</text>
</comment>
<comment type="domain">
    <text evidence="20">The NH2-terminal transmembrane domaine (TMD) is involved in the recognition of substrates, and undergoes a conformational change upon ATP binding to the COOH-terminal nucleotide binding domain (NBD).</text>
</comment>
<comment type="PTM">
    <text evidence="1">Tyrosine-phosphorylated.</text>
</comment>
<comment type="disease" evidence="6 7 8 9 10 12 14 15 16 17 18 26 28 29 30 31 33 34 37 38 39 40 41 42 43 44 45 46 47 48 49 50">
    <disease id="DI-00050">
        <name>Adrenoleukodystrophy</name>
        <acronym>ALD</acronym>
        <description>A peroxisomal metabolic disorder characterized by progressive multifocal demyelination of the central nervous system and by peripheral adrenal insufficiency (Addison disease). It results in mental deterioration, corticospinal tract dysfunction, and cortical blindness. Different clinical manifestations exist like: cerebral childhood ALD (CALD), adult cerebral ALD (ACALD), adrenomyeloneuropathy (AMN) and 'Addison disease only' (ADO) phenotype.</description>
        <dbReference type="MIM" id="300100"/>
    </disease>
    <text>The disease is caused by variants affecting the gene represented in this entry.</text>
</comment>
<comment type="disease">
    <text evidence="19">The promoter region of ABCD1 is deleted in the chromosome Xq28 deletion syndrome which involves ABCD1 and the neighboring gene BCAP31.</text>
</comment>
<comment type="similarity">
    <text evidence="54">Belongs to the ABC transporter superfamily. ABCD family. Peroxisomal fatty acyl CoA transporter (TC 3.A.1.203) subfamily.</text>
</comment>
<comment type="caution">
    <text evidence="55 61">Variants Trp-88, Cys-152, Cys-181, Ser-343, Pro-503, Arg-514 and His-554 have original been associated with ALD. However this paper was retracted due to inconsistencies in a confirmation immunoblot that could not be validated from the originally published data.</text>
</comment>
<comment type="online information" name="X-ALD gene mutation database">
    <link uri="https://adrenoleukodystrophy.info/"/>
</comment>
<comment type="online information" name="ABCMdb">
    <link uri="http://abcm2.hegelab.org/search"/>
    <text>Database for mutations in ABC proteins</text>
</comment>
<dbReference type="EC" id="3.1.2.-" evidence="35 36"/>
<dbReference type="EC" id="7.6.2.-" evidence="15 35 36 56 59"/>
<dbReference type="EMBL" id="Z21876">
    <property type="protein sequence ID" value="CAA79922.1"/>
    <property type="molecule type" value="mRNA"/>
</dbReference>
<dbReference type="EMBL" id="Z31348">
    <property type="protein sequence ID" value="CAA83230.1"/>
    <property type="molecule type" value="Genomic_DNA"/>
</dbReference>
<dbReference type="EMBL" id="Z31006">
    <property type="protein sequence ID" value="CAA83230.1"/>
    <property type="status" value="JOINED"/>
    <property type="molecule type" value="Genomic_DNA"/>
</dbReference>
<dbReference type="EMBL" id="Z31007">
    <property type="protein sequence ID" value="CAA83230.1"/>
    <property type="status" value="JOINED"/>
    <property type="molecule type" value="Genomic_DNA"/>
</dbReference>
<dbReference type="EMBL" id="Z31008">
    <property type="protein sequence ID" value="CAA83230.1"/>
    <property type="status" value="JOINED"/>
    <property type="molecule type" value="Genomic_DNA"/>
</dbReference>
<dbReference type="EMBL" id="Z31009">
    <property type="protein sequence ID" value="CAA83230.1"/>
    <property type="status" value="JOINED"/>
    <property type="molecule type" value="Genomic_DNA"/>
</dbReference>
<dbReference type="EMBL" id="Z31010">
    <property type="protein sequence ID" value="CAA83230.1"/>
    <property type="status" value="JOINED"/>
    <property type="molecule type" value="Genomic_DNA"/>
</dbReference>
<dbReference type="EMBL" id="U52111">
    <property type="status" value="NOT_ANNOTATED_CDS"/>
    <property type="molecule type" value="Genomic_DNA"/>
</dbReference>
<dbReference type="EMBL" id="BC015541">
    <property type="protein sequence ID" value="AAH15541.1"/>
    <property type="molecule type" value="mRNA"/>
</dbReference>
<dbReference type="EMBL" id="BC025358">
    <property type="protein sequence ID" value="AAH25358.1"/>
    <property type="molecule type" value="mRNA"/>
</dbReference>
<dbReference type="CCDS" id="CCDS14728.1"/>
<dbReference type="PIR" id="G02500">
    <property type="entry name" value="G02500"/>
</dbReference>
<dbReference type="RefSeq" id="NP_000024.2">
    <property type="nucleotide sequence ID" value="NM_000033.3"/>
</dbReference>
<dbReference type="PDB" id="7RR9">
    <property type="method" value="EM"/>
    <property type="resolution" value="3.50 A"/>
    <property type="chains" value="A/B=1-745"/>
</dbReference>
<dbReference type="PDB" id="7RRA">
    <property type="method" value="EM"/>
    <property type="resolution" value="4.40 A"/>
    <property type="chains" value="A/B=1-745"/>
</dbReference>
<dbReference type="PDB" id="7SHM">
    <property type="method" value="EM"/>
    <property type="resolution" value="3.14 A"/>
    <property type="chains" value="A/B=2-745"/>
</dbReference>
<dbReference type="PDB" id="7SHN">
    <property type="method" value="EM"/>
    <property type="resolution" value="3.10 A"/>
    <property type="chains" value="A/B=2-686"/>
</dbReference>
<dbReference type="PDB" id="7VR1">
    <property type="method" value="EM"/>
    <property type="resolution" value="3.40 A"/>
    <property type="chains" value="A/B=1-745"/>
</dbReference>
<dbReference type="PDB" id="7VWC">
    <property type="method" value="EM"/>
    <property type="resolution" value="3.53 A"/>
    <property type="chains" value="A/B=65-745"/>
</dbReference>
<dbReference type="PDB" id="7VX8">
    <property type="method" value="EM"/>
    <property type="resolution" value="2.80 A"/>
    <property type="chains" value="A/B=65-745"/>
</dbReference>
<dbReference type="PDB" id="7VZB">
    <property type="method" value="EM"/>
    <property type="resolution" value="3.59 A"/>
    <property type="chains" value="A/B=65-745"/>
</dbReference>
<dbReference type="PDB" id="7X07">
    <property type="method" value="EM"/>
    <property type="resolution" value="3.78 A"/>
    <property type="chains" value="A/B=1-745"/>
</dbReference>
<dbReference type="PDB" id="7X0T">
    <property type="method" value="EM"/>
    <property type="resolution" value="3.30 A"/>
    <property type="chains" value="A/B=1-745"/>
</dbReference>
<dbReference type="PDB" id="7X0Z">
    <property type="method" value="EM"/>
    <property type="resolution" value="2.96 A"/>
    <property type="chains" value="A/B=1-745"/>
</dbReference>
<dbReference type="PDB" id="7X1W">
    <property type="method" value="EM"/>
    <property type="resolution" value="3.30 A"/>
    <property type="chains" value="A/B=1-745"/>
</dbReference>
<dbReference type="PDB" id="7XEC">
    <property type="method" value="EM"/>
    <property type="resolution" value="3.34 A"/>
    <property type="chains" value="A/B=1-745"/>
</dbReference>
<dbReference type="PDB" id="7YRQ">
    <property type="method" value="EM"/>
    <property type="resolution" value="3.35 A"/>
    <property type="chains" value="A/B=1-745"/>
</dbReference>
<dbReference type="PDBsum" id="7RR9"/>
<dbReference type="PDBsum" id="7RRA"/>
<dbReference type="PDBsum" id="7SHM"/>
<dbReference type="PDBsum" id="7SHN"/>
<dbReference type="PDBsum" id="7VR1"/>
<dbReference type="PDBsum" id="7VWC"/>
<dbReference type="PDBsum" id="7VX8"/>
<dbReference type="PDBsum" id="7VZB"/>
<dbReference type="PDBsum" id="7X07"/>
<dbReference type="PDBsum" id="7X0T"/>
<dbReference type="PDBsum" id="7X0Z"/>
<dbReference type="PDBsum" id="7X1W"/>
<dbReference type="PDBsum" id="7XEC"/>
<dbReference type="PDBsum" id="7YRQ"/>
<dbReference type="EMDB" id="EMD-24656"/>
<dbReference type="EMDB" id="EMD-24657"/>
<dbReference type="EMDB" id="EMD-25130"/>
<dbReference type="EMDB" id="EMD-25131"/>
<dbReference type="EMDB" id="EMD-32096"/>
<dbReference type="EMDB" id="EMD-32152"/>
<dbReference type="EMDB" id="EMD-32171"/>
<dbReference type="EMDB" id="EMD-32224"/>
<dbReference type="EMDB" id="EMD-32919"/>
<dbReference type="EMDB" id="EMD-32924"/>
<dbReference type="EMDB" id="EMD-32930"/>
<dbReference type="EMDB" id="EMD-32951"/>
<dbReference type="EMDB" id="EMD-33155"/>
<dbReference type="EMDB" id="EMD-34064"/>
<dbReference type="SMR" id="P33897"/>
<dbReference type="BioGRID" id="106717">
    <property type="interactions" value="82"/>
</dbReference>
<dbReference type="FunCoup" id="P33897">
    <property type="interactions" value="1414"/>
</dbReference>
<dbReference type="IntAct" id="P33897">
    <property type="interactions" value="49"/>
</dbReference>
<dbReference type="MINT" id="P33897"/>
<dbReference type="STRING" id="9606.ENSP00000218104"/>
<dbReference type="SwissLipids" id="SLP:000000458"/>
<dbReference type="TCDB" id="3.A.1.203.3">
    <property type="family name" value="the atp-binding cassette (abc) superfamily"/>
</dbReference>
<dbReference type="GlyCosmos" id="P33897">
    <property type="glycosylation" value="1 site, No reported glycans"/>
</dbReference>
<dbReference type="GlyGen" id="P33897">
    <property type="glycosylation" value="1 site"/>
</dbReference>
<dbReference type="iPTMnet" id="P33897"/>
<dbReference type="PhosphoSitePlus" id="P33897"/>
<dbReference type="SwissPalm" id="P33897"/>
<dbReference type="BioMuta" id="ABCD1"/>
<dbReference type="DMDM" id="67476960"/>
<dbReference type="jPOST" id="P33897"/>
<dbReference type="MassIVE" id="P33897"/>
<dbReference type="PaxDb" id="9606-ENSP00000218104"/>
<dbReference type="PeptideAtlas" id="P33897"/>
<dbReference type="ProteomicsDB" id="54928"/>
<dbReference type="Pumba" id="P33897"/>
<dbReference type="Antibodypedia" id="30940">
    <property type="antibodies" value="443 antibodies from 34 providers"/>
</dbReference>
<dbReference type="DNASU" id="215"/>
<dbReference type="Ensembl" id="ENST00000218104.6">
    <property type="protein sequence ID" value="ENSP00000218104.3"/>
    <property type="gene ID" value="ENSG00000101986.12"/>
</dbReference>
<dbReference type="GeneID" id="215"/>
<dbReference type="KEGG" id="hsa:215"/>
<dbReference type="MANE-Select" id="ENST00000218104.6">
    <property type="protein sequence ID" value="ENSP00000218104.3"/>
    <property type="RefSeq nucleotide sequence ID" value="NM_000033.4"/>
    <property type="RefSeq protein sequence ID" value="NP_000024.2"/>
</dbReference>
<dbReference type="UCSC" id="uc004fif.2">
    <property type="organism name" value="human"/>
</dbReference>
<dbReference type="AGR" id="HGNC:61"/>
<dbReference type="CTD" id="215"/>
<dbReference type="DisGeNET" id="215"/>
<dbReference type="GeneCards" id="ABCD1"/>
<dbReference type="GeneReviews" id="ABCD1"/>
<dbReference type="HGNC" id="HGNC:61">
    <property type="gene designation" value="ABCD1"/>
</dbReference>
<dbReference type="HPA" id="ENSG00000101986">
    <property type="expression patterns" value="Low tissue specificity"/>
</dbReference>
<dbReference type="MalaCards" id="ABCD1"/>
<dbReference type="MIM" id="300100">
    <property type="type" value="phenotype"/>
</dbReference>
<dbReference type="MIM" id="300371">
    <property type="type" value="gene"/>
</dbReference>
<dbReference type="neXtProt" id="NX_P33897"/>
<dbReference type="OpenTargets" id="ENSG00000101986"/>
<dbReference type="Orphanet" id="139399">
    <property type="disease" value="Adrenomyeloneuropathy"/>
</dbReference>
<dbReference type="Orphanet" id="369942">
    <property type="disease" value="CADDS"/>
</dbReference>
<dbReference type="Orphanet" id="388">
    <property type="disease" value="Hirschsprung disease"/>
</dbReference>
<dbReference type="Orphanet" id="139396">
    <property type="disease" value="X-linked cerebral adrenoleukodystrophy"/>
</dbReference>
<dbReference type="PharmGKB" id="PA24396"/>
<dbReference type="VEuPathDB" id="HostDB:ENSG00000101986"/>
<dbReference type="eggNOG" id="KOG0064">
    <property type="taxonomic scope" value="Eukaryota"/>
</dbReference>
<dbReference type="GeneTree" id="ENSGT00950000182955"/>
<dbReference type="HOGENOM" id="CLU_007587_1_1_1"/>
<dbReference type="InParanoid" id="P33897"/>
<dbReference type="OMA" id="CHRTSLW"/>
<dbReference type="OrthoDB" id="422637at2759"/>
<dbReference type="PAN-GO" id="P33897">
    <property type="GO annotations" value="8 GO annotations based on evolutionary models"/>
</dbReference>
<dbReference type="PhylomeDB" id="P33897"/>
<dbReference type="TreeFam" id="TF105205"/>
<dbReference type="BRENDA" id="7.6.2.4">
    <property type="organism ID" value="2681"/>
</dbReference>
<dbReference type="PathwayCommons" id="P33897"/>
<dbReference type="Reactome" id="R-HSA-1369062">
    <property type="pathway name" value="ABC transporters in lipid homeostasis"/>
</dbReference>
<dbReference type="Reactome" id="R-HSA-2046105">
    <property type="pathway name" value="Linoleic acid (LA) metabolism"/>
</dbReference>
<dbReference type="Reactome" id="R-HSA-2046106">
    <property type="pathway name" value="alpha-linolenic acid (ALA) metabolism"/>
</dbReference>
<dbReference type="Reactome" id="R-HSA-390247">
    <property type="pathway name" value="Beta-oxidation of very long chain fatty acids"/>
</dbReference>
<dbReference type="Reactome" id="R-HSA-5684045">
    <property type="pathway name" value="Defective ABCD1 causes ALD"/>
</dbReference>
<dbReference type="Reactome" id="R-HSA-9603798">
    <property type="pathway name" value="Class I peroxisomal membrane protein import"/>
</dbReference>
<dbReference type="SignaLink" id="P33897"/>
<dbReference type="BioGRID-ORCS" id="215">
    <property type="hits" value="23 hits in 782 CRISPR screens"/>
</dbReference>
<dbReference type="ChiTaRS" id="ABCD1">
    <property type="organism name" value="human"/>
</dbReference>
<dbReference type="GeneWiki" id="ABCD1"/>
<dbReference type="GenomeRNAi" id="215"/>
<dbReference type="Pharos" id="P33897">
    <property type="development level" value="Tbio"/>
</dbReference>
<dbReference type="PRO" id="PR:P33897"/>
<dbReference type="Proteomes" id="UP000005640">
    <property type="component" value="Chromosome X"/>
</dbReference>
<dbReference type="RNAct" id="P33897">
    <property type="molecule type" value="protein"/>
</dbReference>
<dbReference type="Bgee" id="ENSG00000101986">
    <property type="expression patterns" value="Expressed in ileal mucosa and 130 other cell types or tissues"/>
</dbReference>
<dbReference type="ExpressionAtlas" id="P33897">
    <property type="expression patterns" value="baseline and differential"/>
</dbReference>
<dbReference type="GO" id="GO:0005737">
    <property type="term" value="C:cytoplasm"/>
    <property type="evidence" value="ECO:0000314"/>
    <property type="project" value="UniProtKB"/>
</dbReference>
<dbReference type="GO" id="GO:0005829">
    <property type="term" value="C:cytosol"/>
    <property type="evidence" value="ECO:0000304"/>
    <property type="project" value="Reactome"/>
</dbReference>
<dbReference type="GO" id="GO:0005789">
    <property type="term" value="C:endoplasmic reticulum membrane"/>
    <property type="evidence" value="ECO:0000314"/>
    <property type="project" value="UniProtKB"/>
</dbReference>
<dbReference type="GO" id="GO:0005765">
    <property type="term" value="C:lysosomal membrane"/>
    <property type="evidence" value="ECO:0000314"/>
    <property type="project" value="UniProtKB"/>
</dbReference>
<dbReference type="GO" id="GO:0016020">
    <property type="term" value="C:membrane"/>
    <property type="evidence" value="ECO:0007005"/>
    <property type="project" value="UniProtKB"/>
</dbReference>
<dbReference type="GO" id="GO:0031966">
    <property type="term" value="C:mitochondrial membrane"/>
    <property type="evidence" value="ECO:0000314"/>
    <property type="project" value="UniProtKB"/>
</dbReference>
<dbReference type="GO" id="GO:0048471">
    <property type="term" value="C:perinuclear region of cytoplasm"/>
    <property type="evidence" value="ECO:0000314"/>
    <property type="project" value="UniProtKB"/>
</dbReference>
<dbReference type="GO" id="GO:0005778">
    <property type="term" value="C:peroxisomal membrane"/>
    <property type="evidence" value="ECO:0000314"/>
    <property type="project" value="UniProtKB"/>
</dbReference>
<dbReference type="GO" id="GO:0005777">
    <property type="term" value="C:peroxisome"/>
    <property type="evidence" value="ECO:0000314"/>
    <property type="project" value="UniProtKB"/>
</dbReference>
<dbReference type="GO" id="GO:0015607">
    <property type="term" value="F:ABC-type fatty-acyl-CoA transporter activity"/>
    <property type="evidence" value="ECO:0000314"/>
    <property type="project" value="UniProtKB"/>
</dbReference>
<dbReference type="GO" id="GO:0043531">
    <property type="term" value="F:ADP binding"/>
    <property type="evidence" value="ECO:0000314"/>
    <property type="project" value="UniProtKB"/>
</dbReference>
<dbReference type="GO" id="GO:0005524">
    <property type="term" value="F:ATP binding"/>
    <property type="evidence" value="ECO:0000314"/>
    <property type="project" value="UniProtKB"/>
</dbReference>
<dbReference type="GO" id="GO:0016887">
    <property type="term" value="F:ATP hydrolysis activity"/>
    <property type="evidence" value="ECO:0000314"/>
    <property type="project" value="UniProtKB"/>
</dbReference>
<dbReference type="GO" id="GO:0042626">
    <property type="term" value="F:ATPase-coupled transmembrane transporter activity"/>
    <property type="evidence" value="ECO:0000314"/>
    <property type="project" value="UniProtKB"/>
</dbReference>
<dbReference type="GO" id="GO:0019899">
    <property type="term" value="F:enzyme binding"/>
    <property type="evidence" value="ECO:0000353"/>
    <property type="project" value="UniProtKB"/>
</dbReference>
<dbReference type="GO" id="GO:0047617">
    <property type="term" value="F:fatty acyl-CoA hydrolase activity"/>
    <property type="evidence" value="ECO:0000314"/>
    <property type="project" value="UniProtKB"/>
</dbReference>
<dbReference type="GO" id="GO:0042802">
    <property type="term" value="F:identical protein binding"/>
    <property type="evidence" value="ECO:0000353"/>
    <property type="project" value="IntAct"/>
</dbReference>
<dbReference type="GO" id="GO:0005324">
    <property type="term" value="F:long-chain fatty acid transmembrane transporter activity"/>
    <property type="evidence" value="ECO:0000316"/>
    <property type="project" value="UniProtKB"/>
</dbReference>
<dbReference type="GO" id="GO:0042803">
    <property type="term" value="F:protein homodimerization activity"/>
    <property type="evidence" value="ECO:0000314"/>
    <property type="project" value="UniProtKB"/>
</dbReference>
<dbReference type="GO" id="GO:0052817">
    <property type="term" value="F:very long-chain fatty acyl-CoA hydrolase activity"/>
    <property type="evidence" value="ECO:0007669"/>
    <property type="project" value="RHEA"/>
</dbReference>
<dbReference type="GO" id="GO:0036109">
    <property type="term" value="P:alpha-linolenic acid metabolic process"/>
    <property type="evidence" value="ECO:0000304"/>
    <property type="project" value="Reactome"/>
</dbReference>
<dbReference type="GO" id="GO:0006635">
    <property type="term" value="P:fatty acid beta-oxidation"/>
    <property type="evidence" value="ECO:0000314"/>
    <property type="project" value="UniProtKB"/>
</dbReference>
<dbReference type="GO" id="GO:1901570">
    <property type="term" value="P:fatty acid derivative biosynthetic process"/>
    <property type="evidence" value="ECO:0007669"/>
    <property type="project" value="Ensembl"/>
</dbReference>
<dbReference type="GO" id="GO:0030497">
    <property type="term" value="P:fatty acid elongation"/>
    <property type="evidence" value="ECO:0000250"/>
    <property type="project" value="UniProtKB"/>
</dbReference>
<dbReference type="GO" id="GO:0055089">
    <property type="term" value="P:fatty acid homeostasis"/>
    <property type="evidence" value="ECO:0000250"/>
    <property type="project" value="UniProtKB"/>
</dbReference>
<dbReference type="GO" id="GO:0043651">
    <property type="term" value="P:linoleic acid metabolic process"/>
    <property type="evidence" value="ECO:0000304"/>
    <property type="project" value="Reactome"/>
</dbReference>
<dbReference type="GO" id="GO:0042759">
    <property type="term" value="P:long-chain fatty acid biosynthetic process"/>
    <property type="evidence" value="ECO:0007669"/>
    <property type="project" value="Ensembl"/>
</dbReference>
<dbReference type="GO" id="GO:0042758">
    <property type="term" value="P:long-chain fatty acid catabolic process"/>
    <property type="evidence" value="ECO:0000315"/>
    <property type="project" value="UniProtKB"/>
</dbReference>
<dbReference type="GO" id="GO:0015910">
    <property type="term" value="P:long-chain fatty acid import into peroxisome"/>
    <property type="evidence" value="ECO:0000316"/>
    <property type="project" value="UniProtKB"/>
</dbReference>
<dbReference type="GO" id="GO:0043217">
    <property type="term" value="P:myelin maintenance"/>
    <property type="evidence" value="ECO:0000250"/>
    <property type="project" value="UniProtKB"/>
</dbReference>
<dbReference type="GO" id="GO:1900016">
    <property type="term" value="P:negative regulation of cytokine production involved in inflammatory response"/>
    <property type="evidence" value="ECO:0000250"/>
    <property type="project" value="UniProtKB"/>
</dbReference>
<dbReference type="GO" id="GO:1903427">
    <property type="term" value="P:negative regulation of reactive oxygen species biosynthetic process"/>
    <property type="evidence" value="ECO:0000250"/>
    <property type="project" value="UniProtKB"/>
</dbReference>
<dbReference type="GO" id="GO:1990535">
    <property type="term" value="P:neuron projection maintenance"/>
    <property type="evidence" value="ECO:0000250"/>
    <property type="project" value="UniProtKB"/>
</dbReference>
<dbReference type="GO" id="GO:0015919">
    <property type="term" value="P:peroxisomal membrane transport"/>
    <property type="evidence" value="ECO:0000303"/>
    <property type="project" value="UniProtKB"/>
</dbReference>
<dbReference type="GO" id="GO:0007031">
    <property type="term" value="P:peroxisome organization"/>
    <property type="evidence" value="ECO:0000314"/>
    <property type="project" value="UniProtKB"/>
</dbReference>
<dbReference type="GO" id="GO:0032000">
    <property type="term" value="P:positive regulation of fatty acid beta-oxidation"/>
    <property type="evidence" value="ECO:0000315"/>
    <property type="project" value="UniProtKB"/>
</dbReference>
<dbReference type="GO" id="GO:2001280">
    <property type="term" value="P:positive regulation of unsaturated fatty acid biosynthetic process"/>
    <property type="evidence" value="ECO:0000250"/>
    <property type="project" value="UniProtKB"/>
</dbReference>
<dbReference type="GO" id="GO:1900407">
    <property type="term" value="P:regulation of cellular response to oxidative stress"/>
    <property type="evidence" value="ECO:0000250"/>
    <property type="project" value="UniProtKB"/>
</dbReference>
<dbReference type="GO" id="GO:0031998">
    <property type="term" value="P:regulation of fatty acid beta-oxidation"/>
    <property type="evidence" value="ECO:0000250"/>
    <property type="project" value="UniProtKB"/>
</dbReference>
<dbReference type="GO" id="GO:0051900">
    <property type="term" value="P:regulation of mitochondrial depolarization"/>
    <property type="evidence" value="ECO:0000250"/>
    <property type="project" value="UniProtKB"/>
</dbReference>
<dbReference type="GO" id="GO:0002082">
    <property type="term" value="P:regulation of oxidative phosphorylation"/>
    <property type="evidence" value="ECO:0000250"/>
    <property type="project" value="UniProtKB"/>
</dbReference>
<dbReference type="GO" id="GO:0055092">
    <property type="term" value="P:sterol homeostasis"/>
    <property type="evidence" value="ECO:0000250"/>
    <property type="project" value="UniProtKB"/>
</dbReference>
<dbReference type="GO" id="GO:0006636">
    <property type="term" value="P:unsaturated fatty acid biosynthetic process"/>
    <property type="evidence" value="ECO:0007669"/>
    <property type="project" value="Ensembl"/>
</dbReference>
<dbReference type="GO" id="GO:0042760">
    <property type="term" value="P:very long-chain fatty acid catabolic process"/>
    <property type="evidence" value="ECO:0000314"/>
    <property type="project" value="UniProtKB"/>
</dbReference>
<dbReference type="GO" id="GO:0000038">
    <property type="term" value="P:very long-chain fatty acid metabolic process"/>
    <property type="evidence" value="ECO:0000314"/>
    <property type="project" value="UniProtKB"/>
</dbReference>
<dbReference type="GO" id="GO:0036113">
    <property type="term" value="P:very long-chain fatty-acyl-CoA catabolic process"/>
    <property type="evidence" value="ECO:0000315"/>
    <property type="project" value="UniProtKB"/>
</dbReference>
<dbReference type="CDD" id="cd03223">
    <property type="entry name" value="ABCD_peroxisomal_ALDP"/>
    <property type="match status" value="1"/>
</dbReference>
<dbReference type="FunFam" id="3.40.50.300:FF:000800">
    <property type="entry name" value="ATP-binding cassette sub-family D member 1"/>
    <property type="match status" value="1"/>
</dbReference>
<dbReference type="Gene3D" id="3.40.50.300">
    <property type="entry name" value="P-loop containing nucleotide triphosphate hydrolases"/>
    <property type="match status" value="1"/>
</dbReference>
<dbReference type="InterPro" id="IPR003593">
    <property type="entry name" value="AAA+_ATPase"/>
</dbReference>
<dbReference type="InterPro" id="IPR011527">
    <property type="entry name" value="ABC1_TM_dom"/>
</dbReference>
<dbReference type="InterPro" id="IPR036640">
    <property type="entry name" value="ABC1_TM_sf"/>
</dbReference>
<dbReference type="InterPro" id="IPR003439">
    <property type="entry name" value="ABC_transporter-like_ATP-bd"/>
</dbReference>
<dbReference type="InterPro" id="IPR017871">
    <property type="entry name" value="ABC_transporter-like_CS"/>
</dbReference>
<dbReference type="InterPro" id="IPR050835">
    <property type="entry name" value="ABC_transporter_sub-D"/>
</dbReference>
<dbReference type="InterPro" id="IPR005283">
    <property type="entry name" value="FA_transporter"/>
</dbReference>
<dbReference type="InterPro" id="IPR027417">
    <property type="entry name" value="P-loop_NTPase"/>
</dbReference>
<dbReference type="NCBIfam" id="TIGR00954">
    <property type="entry name" value="3a01203"/>
    <property type="match status" value="1"/>
</dbReference>
<dbReference type="PANTHER" id="PTHR11384:SF21">
    <property type="entry name" value="ATP-BINDING CASSETTE SUB-FAMILY D MEMBER 1"/>
    <property type="match status" value="1"/>
</dbReference>
<dbReference type="PANTHER" id="PTHR11384">
    <property type="entry name" value="ATP-BINDING CASSETTE, SUB-FAMILY D MEMBER"/>
    <property type="match status" value="1"/>
</dbReference>
<dbReference type="Pfam" id="PF06472">
    <property type="entry name" value="ABC_membrane_2"/>
    <property type="match status" value="1"/>
</dbReference>
<dbReference type="Pfam" id="PF00005">
    <property type="entry name" value="ABC_tran"/>
    <property type="match status" value="1"/>
</dbReference>
<dbReference type="SMART" id="SM00382">
    <property type="entry name" value="AAA"/>
    <property type="match status" value="1"/>
</dbReference>
<dbReference type="SUPFAM" id="SSF90123">
    <property type="entry name" value="ABC transporter transmembrane region"/>
    <property type="match status" value="1"/>
</dbReference>
<dbReference type="SUPFAM" id="SSF52540">
    <property type="entry name" value="P-loop containing nucleoside triphosphate hydrolases"/>
    <property type="match status" value="1"/>
</dbReference>
<dbReference type="PROSITE" id="PS50929">
    <property type="entry name" value="ABC_TM1F"/>
    <property type="match status" value="1"/>
</dbReference>
<dbReference type="PROSITE" id="PS00211">
    <property type="entry name" value="ABC_TRANSPORTER_1"/>
    <property type="match status" value="1"/>
</dbReference>
<dbReference type="PROSITE" id="PS50893">
    <property type="entry name" value="ABC_TRANSPORTER_2"/>
    <property type="match status" value="1"/>
</dbReference>
<evidence type="ECO:0000250" key="1">
    <source>
        <dbReference type="UniProtKB" id="D3ZHR2"/>
    </source>
</evidence>
<evidence type="ECO:0000250" key="2">
    <source>
        <dbReference type="UniProtKB" id="P48410"/>
    </source>
</evidence>
<evidence type="ECO:0000255" key="3"/>
<evidence type="ECO:0000255" key="4">
    <source>
        <dbReference type="PROSITE-ProRule" id="PRU00434"/>
    </source>
</evidence>
<evidence type="ECO:0000255" key="5">
    <source>
        <dbReference type="PROSITE-ProRule" id="PRU00441"/>
    </source>
</evidence>
<evidence type="ECO:0000269" key="6">
    <source>
    </source>
</evidence>
<evidence type="ECO:0000269" key="7">
    <source>
    </source>
</evidence>
<evidence type="ECO:0000269" key="8">
    <source>
    </source>
</evidence>
<evidence type="ECO:0000269" key="9">
    <source>
    </source>
</evidence>
<evidence type="ECO:0000269" key="10">
    <source>
    </source>
</evidence>
<evidence type="ECO:0000269" key="11">
    <source>
    </source>
</evidence>
<evidence type="ECO:0000269" key="12">
    <source>
    </source>
</evidence>
<evidence type="ECO:0000269" key="13">
    <source>
    </source>
</evidence>
<evidence type="ECO:0000269" key="14">
    <source>
    </source>
</evidence>
<evidence type="ECO:0000269" key="15">
    <source>
    </source>
</evidence>
<evidence type="ECO:0000269" key="16">
    <source>
    </source>
</evidence>
<evidence type="ECO:0000269" key="17">
    <source>
    </source>
</evidence>
<evidence type="ECO:0000269" key="18">
    <source>
    </source>
</evidence>
<evidence type="ECO:0000269" key="19">
    <source>
    </source>
</evidence>
<evidence type="ECO:0000269" key="20">
    <source>
    </source>
</evidence>
<evidence type="ECO:0000269" key="21">
    <source>
    </source>
</evidence>
<evidence type="ECO:0000269" key="22">
    <source>
    </source>
</evidence>
<evidence type="ECO:0000269" key="23">
    <source>
    </source>
</evidence>
<evidence type="ECO:0000269" key="24">
    <source>
    </source>
</evidence>
<evidence type="ECO:0000269" key="25">
    <source>
    </source>
</evidence>
<evidence type="ECO:0000269" key="26">
    <source>
    </source>
</evidence>
<evidence type="ECO:0000269" key="27">
    <source>
    </source>
</evidence>
<evidence type="ECO:0000269" key="28">
    <source>
    </source>
</evidence>
<evidence type="ECO:0000269" key="29">
    <source>
    </source>
</evidence>
<evidence type="ECO:0000269" key="30">
    <source>
    </source>
</evidence>
<evidence type="ECO:0000269" key="31">
    <source>
    </source>
</evidence>
<evidence type="ECO:0000269" key="32">
    <source>
    </source>
</evidence>
<evidence type="ECO:0000269" key="33">
    <source>
    </source>
</evidence>
<evidence type="ECO:0000269" key="34">
    <source>
    </source>
</evidence>
<evidence type="ECO:0000269" key="35">
    <source>
    </source>
</evidence>
<evidence type="ECO:0000269" key="36">
    <source>
    </source>
</evidence>
<evidence type="ECO:0000269" key="37">
    <source>
    </source>
</evidence>
<evidence type="ECO:0000269" key="38">
    <source>
    </source>
</evidence>
<evidence type="ECO:0000269" key="39">
    <source>
    </source>
</evidence>
<evidence type="ECO:0000269" key="40">
    <source>
    </source>
</evidence>
<evidence type="ECO:0000269" key="41">
    <source>
    </source>
</evidence>
<evidence type="ECO:0000269" key="42">
    <source>
    </source>
</evidence>
<evidence type="ECO:0000269" key="43">
    <source>
    </source>
</evidence>
<evidence type="ECO:0000269" key="44">
    <source>
    </source>
</evidence>
<evidence type="ECO:0000269" key="45">
    <source>
    </source>
</evidence>
<evidence type="ECO:0000269" key="46">
    <source>
    </source>
</evidence>
<evidence type="ECO:0000269" key="47">
    <source>
    </source>
</evidence>
<evidence type="ECO:0000269" key="48">
    <source>
    </source>
</evidence>
<evidence type="ECO:0000269" key="49">
    <source>
    </source>
</evidence>
<evidence type="ECO:0000269" key="50">
    <source>
    </source>
</evidence>
<evidence type="ECO:0000303" key="51">
    <source>
    </source>
</evidence>
<evidence type="ECO:0000303" key="52">
    <source>
    </source>
</evidence>
<evidence type="ECO:0000303" key="53">
    <source>
    </source>
</evidence>
<evidence type="ECO:0000305" key="54"/>
<evidence type="ECO:0000305" key="55">
    <source>
    </source>
</evidence>
<evidence type="ECO:0000305" key="56">
    <source>
    </source>
</evidence>
<evidence type="ECO:0000305" key="57">
    <source>
    </source>
</evidence>
<evidence type="ECO:0000305" key="58">
    <source>
    </source>
</evidence>
<evidence type="ECO:0000305" key="59">
    <source>
    </source>
</evidence>
<evidence type="ECO:0000305" key="60">
    <source>
    </source>
</evidence>
<evidence type="ECO:0000305" key="61">
    <source>
    </source>
</evidence>
<evidence type="ECO:0000312" key="62">
    <source>
        <dbReference type="HGNC" id="HGNC:61"/>
    </source>
</evidence>
<evidence type="ECO:0007744" key="63">
    <source>
    </source>
</evidence>
<evidence type="ECO:0007744" key="64">
    <source>
    </source>
</evidence>
<evidence type="ECO:0007829" key="65">
    <source>
        <dbReference type="PDB" id="7RR9"/>
    </source>
</evidence>
<evidence type="ECO:0007829" key="66">
    <source>
        <dbReference type="PDB" id="7SHM"/>
    </source>
</evidence>
<evidence type="ECO:0007829" key="67">
    <source>
        <dbReference type="PDB" id="7SHN"/>
    </source>
</evidence>
<evidence type="ECO:0007829" key="68">
    <source>
        <dbReference type="PDB" id="7VR1"/>
    </source>
</evidence>
<evidence type="ECO:0007829" key="69">
    <source>
        <dbReference type="PDB" id="7VX8"/>
    </source>
</evidence>
<evidence type="ECO:0007829" key="70">
    <source>
        <dbReference type="PDB" id="7X0T"/>
    </source>
</evidence>
<evidence type="ECO:0007829" key="71">
    <source>
        <dbReference type="PDB" id="7X0Z"/>
    </source>
</evidence>
<evidence type="ECO:0007829" key="72">
    <source>
        <dbReference type="PDB" id="7X1W"/>
    </source>
</evidence>
<evidence type="ECO:0007829" key="73">
    <source>
        <dbReference type="PDB" id="7XEC"/>
    </source>
</evidence>
<evidence type="ECO:0007829" key="74">
    <source>
        <dbReference type="PDB" id="7YRQ"/>
    </source>
</evidence>
<name>ABCD1_HUMAN</name>
<sequence length="745" mass="82937">MPVLSRPRPWRGNTLKRTAVLLALAAYGAHKVYPLVRQCLAPARGLQAPAGEPTQEASGVAAAKAGMNRVFLQRLLWLLRLLFPRVLCRETGLLALHSAALVSRTFLSVYVARLDGRLARCIVRKDPRAFGWQLLQWLLIALPATFVNSAIRYLEGQLALSFRSRLVAHAYRLYFSQQTYYRVSNMDGRLRNPDQSLTEDVVAFAASVAHLYSNLTKPLLDVAVTSYTLLRAARSRGAGTAWPSAIAGLVVFLTANVLRAFSPKFGELVAEEARRKGELRYMHSRVVANSEEIAFYGGHEVELALLQRSYQDLASQINLILLERLWYVMLEQFLMKYVWSASGLLMVAVPIITATGYSESDAEAVKKAALEKKEEELVSERTEAFTIARNLLTAAADAIERIMSSYKEVTELAGYTARVHEMFQVFEDVQRCHFKRPRELEDAQAGSGTIGRSGVRVEGPLKIRGQVVDVEQGIICENIPIVTPSGEVVVASLNIRVEEGMHLLITGPNGCGKSSLFRILGGLWPTYGGVLYKPPPQRMFYIPQRPYMSVGSLRDQVIYPDSVEDMQRKGYSEQDLEAILDVVHLHHILQREGGWEAMCDWKDVLSGGEKQRIGMARMFYHRPKYALLDECTSAVSIDVEGKIFQAAKDAGIALLSITHRPSLWKYHTHLLQFDGEGGWKFEKLDSAARLSLTEEKQRLEQQLAGIPKMQRRLQELCQILGEAVAPAHVPAPSPQGPGGLQGAST</sequence>
<keyword id="KW-0002">3D-structure</keyword>
<keyword id="KW-0067">ATP-binding</keyword>
<keyword id="KW-0225">Disease variant</keyword>
<keyword id="KW-0256">Endoplasmic reticulum</keyword>
<keyword id="KW-0325">Glycoprotein</keyword>
<keyword id="KW-0378">Hydrolase</keyword>
<keyword id="KW-0458">Lysosome</keyword>
<keyword id="KW-0472">Membrane</keyword>
<keyword id="KW-0496">Mitochondrion</keyword>
<keyword id="KW-0547">Nucleotide-binding</keyword>
<keyword id="KW-0576">Peroxisome</keyword>
<keyword id="KW-0597">Phosphoprotein</keyword>
<keyword id="KW-1267">Proteomics identification</keyword>
<keyword id="KW-1185">Reference proteome</keyword>
<keyword id="KW-1278">Translocase</keyword>
<keyword id="KW-0812">Transmembrane</keyword>
<keyword id="KW-1133">Transmembrane helix</keyword>
<keyword id="KW-0813">Transport</keyword>
<gene>
    <name evidence="62" type="primary">ABCD1</name>
    <name type="synonym">ALD</name>
</gene>
<proteinExistence type="evidence at protein level"/>
<feature type="chain" id="PRO_0000093304" description="ATP-binding cassette sub-family D member 1">
    <location>
        <begin position="1"/>
        <end position="745"/>
    </location>
</feature>
<feature type="transmembrane region" description="Helical" evidence="5">
    <location>
        <begin position="92"/>
        <end position="112"/>
    </location>
</feature>
<feature type="transmembrane region" description="Helical" evidence="5">
    <location>
        <begin position="131"/>
        <end position="151"/>
    </location>
</feature>
<feature type="transmembrane region" description="Helical" evidence="5">
    <location>
        <begin position="238"/>
        <end position="258"/>
    </location>
</feature>
<feature type="transmembrane region" description="Helical" evidence="5">
    <location>
        <begin position="333"/>
        <end position="353"/>
    </location>
</feature>
<feature type="transmembrane region" description="Helical" evidence="5">
    <location>
        <begin position="473"/>
        <end position="493"/>
    </location>
</feature>
<feature type="domain" description="ABC transmembrane type-1" evidence="5">
    <location>
        <begin position="94"/>
        <end position="386"/>
    </location>
</feature>
<feature type="domain" description="ABC transporter" evidence="4">
    <location>
        <begin position="474"/>
        <end position="700"/>
    </location>
</feature>
<feature type="region of interest" description="Interaction with PEX19" evidence="13">
    <location>
        <begin position="67"/>
        <end position="186"/>
    </location>
</feature>
<feature type="region of interest" description="PEX19 binding site and required for peroxisomal targeting" evidence="21">
    <location>
        <begin position="67"/>
        <end position="84"/>
    </location>
</feature>
<feature type="region of interest" description="Required for homodimerization" evidence="24">
    <location>
        <begin position="658"/>
        <end position="745"/>
    </location>
</feature>
<feature type="binding site" evidence="4">
    <location>
        <begin position="507"/>
        <end position="514"/>
    </location>
    <ligand>
        <name>ATP</name>
        <dbReference type="ChEBI" id="CHEBI:30616"/>
    </ligand>
</feature>
<feature type="modified residue" description="Phosphoserine" evidence="63 64">
    <location>
        <position position="733"/>
    </location>
</feature>
<feature type="glycosylation site" description="N-linked (GlcNAc...) asparagine" evidence="3">
    <location>
        <position position="214"/>
    </location>
</feature>
<feature type="sequence variant" id="VAR_013340" description="Does not affect fatty acid beta-oxidation; dbSNP:rs183021839." evidence="16">
    <original>N</original>
    <variation>T</variation>
    <location>
        <position position="13"/>
    </location>
</feature>
<feature type="sequence variant" id="VAR_009349" description="In ALD." evidence="17">
    <original>E</original>
    <variation>K</variation>
    <location>
        <position position="90"/>
    </location>
</feature>
<feature type="sequence variant" id="VAR_075284" description="In ALD." evidence="31">
    <original>A</original>
    <variation>D</variation>
    <location>
        <position position="95"/>
    </location>
</feature>
<feature type="sequence variant" id="VAR_000024" description="In ALD; CALD type; dbSNP:rs1557052294." evidence="16 47">
    <original>S</original>
    <variation>L</variation>
    <location>
        <position position="98"/>
    </location>
</feature>
<feature type="sequence variant" id="VAR_013341" description="In ALD; AMN-type." evidence="16">
    <original>A</original>
    <variation>D</variation>
    <location>
        <position position="99"/>
    </location>
</feature>
<feature type="sequence variant" id="VAR_009350" description="In ALD." evidence="12">
    <original>S</original>
    <variation>R</variation>
    <location>
        <position position="103"/>
    </location>
</feature>
<feature type="sequence variant" id="VAR_000025" description="In ALD; dbSNP:rs2148388971." evidence="38 41">
    <original>R</original>
    <variation>C</variation>
    <location>
        <position position="104"/>
    </location>
</feature>
<feature type="sequence variant" id="VAR_000026" description="In ALD; ADO-type; dbSNP:rs1557052302." evidence="40">
    <original>R</original>
    <variation>H</variation>
    <location>
        <position position="104"/>
    </location>
</feature>
<feature type="sequence variant" id="VAR_000027" description="In ALD; ADO-type; dbSNP:rs2148388980." evidence="47">
    <original>T</original>
    <variation>I</variation>
    <location>
        <position position="105"/>
    </location>
</feature>
<feature type="sequence variant" id="VAR_009351" description="In ALD." evidence="9">
    <original>T</original>
    <variation>P</variation>
    <location>
        <position position="105"/>
    </location>
</feature>
<feature type="sequence variant" id="VAR_000028" description="In ALD; ALD/AMN/ADO-types and asymptomatic; dbSNP:rs1569540688." evidence="46">
    <original>L</original>
    <variation>P</variation>
    <location>
        <position position="107"/>
    </location>
</feature>
<feature type="sequence variant" id="VAR_009352" description="In ALD; dbSNP:rs2091705631." evidence="8 26">
    <original>S</original>
    <variation>L</variation>
    <location>
        <position position="108"/>
    </location>
</feature>
<feature type="sequence variant" id="VAR_000029" description="In ALD; CALD and AMN-types." evidence="47">
    <original>S</original>
    <variation>W</variation>
    <location>
        <position position="108"/>
    </location>
</feature>
<feature type="sequence variant" id="VAR_009353" description="In ALD; dbSNP:rs1557052306." evidence="17">
    <original>R</original>
    <variation>C</variation>
    <location>
        <position position="113"/>
    </location>
</feature>
<feature type="sequence variant" id="VAR_013342" description="In ALD." evidence="17">
    <original>R</original>
    <variation>P</variation>
    <location>
        <position position="113"/>
    </location>
</feature>
<feature type="sequence variant" id="VAR_000030" description="In ALD; CALD-type; dbSNP:rs398123110." evidence="12 47">
    <original>G</original>
    <variation>R</variation>
    <location>
        <position position="116"/>
    </location>
</feature>
<feature type="sequence variant" id="VAR_000032" description="In ALD; ALD-type; dbSNP:rs1557052351." evidence="7">
    <location>
        <begin position="138"/>
        <end position="141"/>
    </location>
</feature>
<feature type="sequence variant" id="VAR_067239" description="In ALD; dbSNP:rs1557052351." evidence="28">
    <location>
        <position position="139"/>
    </location>
</feature>
<feature type="sequence variant" id="VAR_000033" description="In ALD; dbSNP:rs193922097." evidence="38">
    <original>A</original>
    <variation>T</variation>
    <location>
        <position position="141"/>
    </location>
</feature>
<feature type="sequence variant" id="VAR_009354" description="In ALD." evidence="8 9">
    <original>P</original>
    <variation>S</variation>
    <location>
        <position position="143"/>
    </location>
</feature>
<feature type="sequence variant" id="VAR_000034" description="In ALD; ADO-type; dbSNP:rs128624216." evidence="6 9 26 42 47">
    <original>N</original>
    <variation>S</variation>
    <location>
        <position position="148"/>
    </location>
</feature>
<feature type="sequence variant" id="VAR_000035" description="In ALD." evidence="41">
    <original>S</original>
    <variation>N</variation>
    <location>
        <position position="149"/>
    </location>
</feature>
<feature type="sequence variant" id="VAR_009355" description="In ALD." evidence="17">
    <original>R</original>
    <variation>L</variation>
    <location>
        <position position="152"/>
    </location>
</feature>
<feature type="sequence variant" id="VAR_000037" description="In ALD; dbSNP:rs1557052367." evidence="41">
    <original>R</original>
    <variation>P</variation>
    <location>
        <position position="152"/>
    </location>
</feature>
<feature type="sequence variant" id="VAR_009356" description="In ALD; dbSNP:rs1569540693." evidence="12">
    <original>R</original>
    <variation>S</variation>
    <location>
        <position position="152"/>
    </location>
</feature>
<feature type="sequence variant" id="VAR_009357" description="In ALD; dbSNP:rs2148389260." evidence="17">
    <original>S</original>
    <variation>P</variation>
    <location>
        <position position="161"/>
    </location>
</feature>
<feature type="sequence variant" id="VAR_000038" description="In ALD; dbSNP:rs1057517954." evidence="41">
    <original>R</original>
    <variation>H</variation>
    <location>
        <position position="163"/>
    </location>
</feature>
<feature type="sequence variant" id="VAR_009358" description="In ALD; dbSNP:rs1057517954." evidence="17">
    <original>R</original>
    <variation>P</variation>
    <location>
        <position position="163"/>
    </location>
</feature>
<feature type="sequence variant" id="VAR_009359" description="In ALD; dbSNP:rs1557052390." evidence="12">
    <original>Y</original>
    <variation>C</variation>
    <location>
        <position position="174"/>
    </location>
</feature>
<feature type="sequence variant" id="VAR_000039" description="In ALD; ALD-type; dbSNP:rs128624217." evidence="42 46">
    <original>Y</original>
    <variation>D</variation>
    <location>
        <position position="174"/>
    </location>
</feature>
<feature type="sequence variant" id="VAR_000040" description="In ALD; CALD-type and AMN-type; dbSNP:rs1557052390." evidence="34 43">
    <original>Y</original>
    <variation>S</variation>
    <location>
        <position position="174"/>
    </location>
</feature>
<feature type="sequence variant" id="VAR_000041" description="In ALD; AMN-type." evidence="40">
    <original>Q</original>
    <variation>E</variation>
    <location>
        <position position="178"/>
    </location>
</feature>
<feature type="sequence variant" id="VAR_000043" description="In ALD." evidence="38">
    <original>R</original>
    <variation>P</variation>
    <location>
        <position position="182"/>
    </location>
</feature>
<feature type="sequence variant" id="VAR_009360" description="In ALD; dbSNP:rs1131691916." evidence="12">
    <original>R</original>
    <variation>W</variation>
    <location>
        <position position="189"/>
    </location>
</feature>
<feature type="sequence variant" id="VAR_009361" description="In ALD." evidence="9">
    <original>L</original>
    <variation>P</variation>
    <location>
        <position position="190"/>
    </location>
</feature>
<feature type="sequence variant" id="VAR_000044" description="In ALD." evidence="41">
    <original>D</original>
    <variation>H</variation>
    <location>
        <position position="194"/>
    </location>
</feature>
<feature type="sequence variant" id="VAR_009362" description="In ALD." evidence="17">
    <original>T</original>
    <variation>K</variation>
    <location>
        <position position="198"/>
    </location>
</feature>
<feature type="sequence variant" id="VAR_067240" description="In ALD." evidence="28">
    <original>T</original>
    <variation>R</variation>
    <location>
        <position position="198"/>
    </location>
</feature>
<feature type="sequence variant" id="VAR_009363" description="In ALD; dbSNP:rs2091708688." evidence="6">
    <original>D</original>
    <variation>N</variation>
    <location>
        <position position="200"/>
    </location>
</feature>
<feature type="sequence variant" id="VAR_000045" description="In ALD; CALD-type." evidence="47">
    <original>D</original>
    <variation>V</variation>
    <location>
        <position position="200"/>
    </location>
</feature>
<feature type="sequence variant" id="VAR_013343" description="In ALD." evidence="17">
    <original>S</original>
    <variation>SAAS</variation>
    <location>
        <position position="207"/>
    </location>
</feature>
<feature type="sequence variant" id="VAR_000046" description="In ALD." evidence="46">
    <original>L</original>
    <variation>P</variation>
    <location>
        <position position="211"/>
    </location>
</feature>
<feature type="sequence variant" id="VAR_009364" description="In ALD." evidence="49">
    <original>S</original>
    <variation>C</variation>
    <location>
        <position position="213"/>
    </location>
</feature>
<feature type="sequence variant" id="VAR_009365" description="In ALD." evidence="6 26">
    <original>N</original>
    <variation>D</variation>
    <location>
        <position position="214"/>
    </location>
</feature>
<feature type="sequence variant" id="VAR_013344" description="In ALD; not able to restore defective beta-oxidation in fibroblast from patients with ALD." evidence="16">
    <original>K</original>
    <variation>E</variation>
    <location>
        <position position="217"/>
    </location>
</feature>
<feature type="sequence variant" id="VAR_009366" description="In ALD." evidence="12">
    <original>P</original>
    <variation>T</variation>
    <location>
        <position position="218"/>
    </location>
</feature>
<feature type="sequence variant" id="VAR_000047" description="In ALD; dbSNP:rs2091709142." evidence="41">
    <original>L</original>
    <variation>P</variation>
    <location>
        <position position="220"/>
    </location>
</feature>
<feature type="sequence variant" id="VAR_000048" description="In ALD; CALD and AMN-types." evidence="47">
    <original>D</original>
    <variation>G</variation>
    <location>
        <position position="221"/>
    </location>
</feature>
<feature type="sequence variant" id="VAR_013345" description="In ALD." evidence="17">
    <original>V</original>
    <variation>E</variation>
    <location>
        <position position="224"/>
    </location>
</feature>
<feature type="sequence variant" id="VAR_009367" description="In ALD." evidence="12">
    <original>L</original>
    <variation>P</variation>
    <location>
        <position position="229"/>
    </location>
</feature>
<feature type="sequence variant" id="VAR_000049" description="In ALD; AMN-type; dbSNP:rs1131691743." evidence="46">
    <original>T</original>
    <variation>M</variation>
    <location>
        <position position="254"/>
    </location>
</feature>
<feature type="sequence variant" id="VAR_000050" description="In ALD; AMN-type." evidence="26">
    <original>T</original>
    <variation>P</variation>
    <location>
        <position position="254"/>
    </location>
</feature>
<feature type="sequence variant" id="VAR_000051" description="In ALD; CALD, AMN and AD-types." evidence="47">
    <original>P</original>
    <variation>L</variation>
    <location>
        <position position="263"/>
    </location>
</feature>
<feature type="sequence variant" id="VAR_067241" description="In ALD; dbSNP:rs2091711094." evidence="28">
    <original>G</original>
    <variation>E</variation>
    <location>
        <position position="266"/>
    </location>
</feature>
<feature type="sequence variant" id="VAR_000052" description="In ALD; dbSNP:rs128624218." evidence="6 26 28 30 41 42">
    <original>G</original>
    <variation>R</variation>
    <location>
        <position position="266"/>
    </location>
</feature>
<feature type="sequence variant" id="VAR_009368" description="In ALD." evidence="6 26">
    <original>E</original>
    <variation>K</variation>
    <location>
        <position position="271"/>
    </location>
</feature>
<feature type="sequence variant" id="VAR_013346" description="In ALD; uncertain significance; dbSNP:rs782760033." evidence="17">
    <original>R</original>
    <variation>W</variation>
    <location>
        <position position="274"/>
    </location>
</feature>
<feature type="sequence variant" id="VAR_000053" description="In ALD; CALD-type." evidence="39">
    <original>K</original>
    <variation>E</variation>
    <location>
        <position position="276"/>
    </location>
</feature>
<feature type="sequence variant" id="VAR_000055" description="In ALD; ADO-type." evidence="7">
    <original>G</original>
    <variation>GN</variation>
    <location>
        <position position="277"/>
    </location>
</feature>
<feature type="sequence variant" id="VAR_000054" description="In ALD; AMN-type; dbSNP:rs1603232195." evidence="26 46">
    <original>G</original>
    <variation>R</variation>
    <location>
        <position position="277"/>
    </location>
</feature>
<feature type="sequence variant" id="VAR_000056" description="In ALD; dbSNP:rs1603232195." evidence="38">
    <original>G</original>
    <variation>W</variation>
    <location>
        <position position="277"/>
    </location>
</feature>
<feature type="sequence variant" id="VAR_013347" description="In ALD; dbSNP:rs193922098." evidence="17">
    <original>R</original>
    <variation>C</variation>
    <location>
        <position position="280"/>
    </location>
</feature>
<feature type="sequence variant" id="VAR_009369" description="In ALD." evidence="17">
    <original>R</original>
    <variation>P</variation>
    <location>
        <position position="285"/>
    </location>
</feature>
<feature type="sequence variant" id="VAR_000057" description="In ALD; ACALD and CALD-types; dbSNP:rs2148389975." evidence="39">
    <original>E</original>
    <variation>D</variation>
    <location>
        <position position="291"/>
    </location>
</feature>
<feature type="sequence variant" id="VAR_000058" description="In ALD; dbSNP:rs128624213." evidence="44">
    <original>E</original>
    <variation>K</variation>
    <location>
        <position position="291"/>
    </location>
</feature>
<feature type="sequence variant" id="VAR_000059" description="In ALD; ALD-type." evidence="39">
    <location>
        <position position="291"/>
    </location>
</feature>
<feature type="sequence variant" id="VAR_000060" description="In ALD; AMN-type; dbSNP:rs1131691954." evidence="47">
    <original>A</original>
    <variation>T</variation>
    <location>
        <position position="294"/>
    </location>
</feature>
<feature type="sequence variant" id="VAR_009370" description="In ALD; dbSNP:rs797044610." evidence="6">
    <original>Y</original>
    <variation>C</variation>
    <location>
        <position position="296"/>
    </location>
</feature>
<feature type="sequence variant" id="VAR_009371" description="In ALD." evidence="9 12">
    <original>G</original>
    <variation>D</variation>
    <location>
        <position position="298"/>
    </location>
</feature>
<feature type="sequence variant" id="VAR_013348" description="In ALD." evidence="18">
    <original>E</original>
    <variation>EVGQ</variation>
    <location>
        <position position="300"/>
    </location>
</feature>
<feature type="sequence variant" id="VAR_009372" description="In ALD." evidence="30">
    <original>E</original>
    <variation>K</variation>
    <location>
        <position position="302"/>
    </location>
</feature>
<feature type="sequence variant" id="VAR_075285" description="In ALD." evidence="33">
    <original>Q</original>
    <variation>P</variation>
    <location>
        <position position="316"/>
    </location>
</feature>
<feature type="sequence variant" id="VAR_009373" description="In ALD; dbSNP:rs2148391974." evidence="50">
    <original>L</original>
    <variation>P</variation>
    <location>
        <position position="322"/>
    </location>
</feature>
<feature type="sequence variant" id="VAR_009374" description="In ALD." evidence="17">
    <original>K</original>
    <variation>M</variation>
    <location>
        <position position="336"/>
    </location>
</feature>
<feature type="sequence variant" id="VAR_013349" description="In ALD; dbSNP:rs1603233120." evidence="9">
    <original>W</original>
    <variation>R</variation>
    <location>
        <position position="339"/>
    </location>
</feature>
<feature type="sequence variant" id="VAR_000061" description="In ALD; AMN-type." evidence="39">
    <original>S</original>
    <variation>P</variation>
    <location>
        <position position="342"/>
    </location>
</feature>
<feature type="sequence variant" id="VAR_013350" description="In ALD; dbSNP:rs2091726809." evidence="17">
    <original>G</original>
    <variation>D</variation>
    <location>
        <position position="343"/>
    </location>
</feature>
<feature type="sequence variant" id="VAR_000062" description="In ALD; AMN-type; dbSNP:rs128624215." evidence="46">
    <original>R</original>
    <variation>G</variation>
    <location>
        <position position="389"/>
    </location>
</feature>
<feature type="sequence variant" id="VAR_000063" description="In ALD; does not affect protein stability, homo- and heterodimerization with ABCD2 and ABCD3; dbSNP:rs886044777." evidence="10 38 39 41">
    <original>R</original>
    <variation>H</variation>
    <location>
        <position position="389"/>
    </location>
</feature>
<feature type="sequence variant" id="VAR_000064" description="In ALD; ALD and AMN-types; does not affect protein stability, homo- and heterodimerization with ABCD2 and ABCD3; dbSNP:rs128624219." evidence="10 12 14 29 30 39 42 46">
    <original>R</original>
    <variation>Q</variation>
    <location>
        <position position="401"/>
    </location>
</feature>
<feature type="sequence variant" id="VAR_009375" description="In ALD; dbSNP:rs727503786." evidence="6 12 26 28">
    <original>R</original>
    <variation>W</variation>
    <location>
        <position position="401"/>
    </location>
</feature>
<feature type="sequence variant" id="VAR_000065" description="In ALD; AMN-type; dbSNP:rs128624220." evidence="12 14 42 46">
    <original>R</original>
    <variation>W</variation>
    <location>
        <position position="418"/>
    </location>
</feature>
<feature type="sequence variant" id="VAR_013351" description="In ALD." evidence="17">
    <location>
        <position position="427"/>
    </location>
</feature>
<feature type="sequence variant" id="VAR_000066" description="In ALD; CALD, AMN and ADO-types; significantly decreases homodimerization and abolishes heterodimerization with ABCD2 and ABCD3; dbSNP:rs128624214." evidence="10">
    <original>P</original>
    <variation>R</variation>
    <location>
        <position position="484"/>
    </location>
</feature>
<feature type="sequence variant" id="VAR_000067" description="In ALD; CALD-types." evidence="6">
    <original>G</original>
    <variation>V</variation>
    <location>
        <position position="507"/>
    </location>
</feature>
<feature type="sequence variant" id="VAR_000068" description="In ALD; CALD and AS-types; reduced ATPase activity; dbSNP:rs1569541088." evidence="15 37 38 47">
    <original>G</original>
    <variation>S</variation>
    <location>
        <position position="512"/>
    </location>
</feature>
<feature type="sequence variant" id="VAR_000069" description="In ALD; dbSNP:rs128624223." evidence="42">
    <original>S</original>
    <variation>F</variation>
    <location>
        <position position="515"/>
    </location>
</feature>
<feature type="sequence variant" id="VAR_067328" description="In ALD." evidence="29">
    <original>L</original>
    <variation>P</variation>
    <location>
        <position position="516"/>
    </location>
</feature>
<feature type="sequence variant" id="VAR_000070" description="In ALD; CALD-type; dbSNP:rs398123102." evidence="6 16 26 28">
    <original>R</original>
    <variation>Q</variation>
    <location>
        <position position="518"/>
    </location>
</feature>
<feature type="sequence variant" id="VAR_000071" description="In ALD; CALD-type; dbSNP:rs128624224." evidence="26 45 47">
    <original>R</original>
    <variation>W</variation>
    <location>
        <position position="518"/>
    </location>
</feature>
<feature type="sequence variant" id="VAR_000072" description="In ALD; AD-type." evidence="47">
    <original>G</original>
    <variation>W</variation>
    <location>
        <position position="522"/>
    </location>
</feature>
<feature type="sequence variant" id="VAR_067242" description="In ALD; dbSNP:rs1159943880." evidence="28">
    <original>L</original>
    <variation>F</variation>
    <location>
        <position position="523"/>
    </location>
</feature>
<feature type="sequence variant" id="VAR_000073" description="In ALD; CALD-type." evidence="40">
    <location>
        <position position="528"/>
    </location>
</feature>
<feature type="sequence variant" id="VAR_009376" description="In ALD; dbSNP:rs2148397619." evidence="9">
    <original>G</original>
    <variation>S</variation>
    <location>
        <position position="529"/>
    </location>
</feature>
<feature type="sequence variant" id="VAR_000074" description="In ALD." evidence="37">
    <original>P</original>
    <variation>L</variation>
    <location>
        <position position="534"/>
    </location>
</feature>
<feature type="sequence variant" id="VAR_067243" description="In ALD." evidence="28">
    <original>F</original>
    <variation>C</variation>
    <location>
        <position position="540"/>
    </location>
</feature>
<feature type="sequence variant" id="VAR_009377" description="In ALD." evidence="6 26">
    <original>F</original>
    <variation>S</variation>
    <location>
        <position position="540"/>
    </location>
</feature>
<feature type="sequence variant" id="VAR_009378" description="In ALD; dbSNP:rs1557054776." evidence="12 14">
    <original>P</original>
    <variation>L</variation>
    <location>
        <position position="543"/>
    </location>
</feature>
<feature type="sequence variant" id="VAR_009379" description="In ALD; dbSNP:rs2091763089." evidence="6 26">
    <original>Q</original>
    <variation>R</variation>
    <location>
        <position position="544"/>
    </location>
</feature>
<feature type="sequence variant" id="VAR_009380" description="In ALD." evidence="7">
    <original>S</original>
    <variation>P</variation>
    <location>
        <position position="552"/>
    </location>
</feature>
<feature type="sequence variant" id="VAR_009381" description="In ALD; dbSNP:rs201568579." evidence="12">
    <original>R</original>
    <variation>H</variation>
    <location>
        <position position="554"/>
    </location>
</feature>
<feature type="sequence variant" id="VAR_013352" description="In ALD; ACALD type." evidence="14">
    <original>Q</original>
    <variation>R</variation>
    <location>
        <position position="556"/>
    </location>
</feature>
<feature type="sequence variant" id="VAR_000075" description="In ALD; CALD-type; dbSNP:rs398123105." evidence="26 28 29 40">
    <original>P</original>
    <variation>L</variation>
    <location>
        <position position="560"/>
    </location>
</feature>
<feature type="sequence variant" id="VAR_000076" description="In ALD; AMN and ALMD-types; dbSNP:rs398123105." evidence="47">
    <original>P</original>
    <variation>R</variation>
    <location>
        <position position="560"/>
    </location>
</feature>
<feature type="sequence variant" id="VAR_013353" description="In ALD." evidence="17">
    <original>P</original>
    <variation>S</variation>
    <location>
        <position position="560"/>
    </location>
</feature>
<feature type="sequence variant" id="VAR_000077" description="In ALD." evidence="38">
    <original>M</original>
    <variation>K</variation>
    <location>
        <position position="566"/>
    </location>
</feature>
<feature type="sequence variant" id="VAR_013354" description="In ALD." evidence="17">
    <original>R</original>
    <variation>P</variation>
    <location>
        <position position="591"/>
    </location>
</feature>
<feature type="sequence variant" id="VAR_000078" description="In ALD; AMN-type; significantly decreases homodimerization and abolishes heterodimerization with ABCD2 and ABCD3; dbSNP:rs1557054873." evidence="10 39">
    <original>R</original>
    <variation>Q</variation>
    <location>
        <position position="591"/>
    </location>
</feature>
<feature type="sequence variant" id="VAR_009382" description="In ALD; dbSNP:rs398123106." evidence="6 30">
    <original>R</original>
    <variation>W</variation>
    <location>
        <position position="591"/>
    </location>
</feature>
<feature type="sequence variant" id="VAR_000079" description="In ALD; decreased ATP-binding affinity; dbSNP:rs128624225." evidence="6 15 38 39 45">
    <original>S</original>
    <variation>L</variation>
    <location>
        <position position="606"/>
    </location>
</feature>
<feature type="sequence variant" id="VAR_000080" description="In ALD; uncertain significance; CALD, AMN and ALMD-types; dbSNP:rs201774661." evidence="28 29 30 47">
    <original>S</original>
    <variation>P</variation>
    <location>
        <position position="606"/>
    </location>
</feature>
<feature type="sequence variant" id="VAR_013355" description="In ALD; uncertain significance; CALD-type; dbSNP:rs78993751." evidence="16">
    <original>G</original>
    <variation>D</variation>
    <location>
        <position position="608"/>
    </location>
</feature>
<feature type="sequence variant" id="VAR_000081" description="In ALD; dbSNP:rs1557055260." evidence="41">
    <original>E</original>
    <variation>G</variation>
    <location>
        <position position="609"/>
    </location>
</feature>
<feature type="sequence variant" id="VAR_000082" description="In ALD; AMN-type; dbSNP:rs150346282." evidence="26 30 41 46">
    <original>E</original>
    <variation>K</variation>
    <location>
        <position position="609"/>
    </location>
</feature>
<feature type="sequence variant" id="VAR_009383" description="In ALD." evidence="12">
    <original>A</original>
    <variation>V</variation>
    <location>
        <position position="616"/>
    </location>
</feature>
<feature type="sequence variant" id="VAR_000083" description="In ALD; ALD-type and asymptomatic; dbSNP:rs4010613." evidence="41 45 46">
    <original>R</original>
    <variation>C</variation>
    <location>
        <position position="617"/>
    </location>
</feature>
<feature type="sequence variant" id="VAR_000084" description="In ALD; ADO and AMN-types with cerebral involvement; dbSNP:rs4010613." evidence="46">
    <original>R</original>
    <variation>G</variation>
    <location>
        <position position="617"/>
    </location>
</feature>
<feature type="sequence variant" id="VAR_000085" description="In ALD; dbSNP:rs11146842." evidence="28 38 39 45">
    <original>R</original>
    <variation>H</variation>
    <location>
        <position position="617"/>
    </location>
</feature>
<feature type="sequence variant" id="VAR_013356" description="In ALD." evidence="17">
    <original>A</original>
    <variation>D</variation>
    <location>
        <position position="626"/>
    </location>
</feature>
<feature type="sequence variant" id="VAR_000086" description="In ALD; CALD and AMN-types; dbSNP:rs1557055316." evidence="28 39">
    <original>A</original>
    <variation>T</variation>
    <location>
        <position position="626"/>
    </location>
</feature>
<feature type="sequence variant" id="VAR_000087" description="In ALD." evidence="39">
    <original>D</original>
    <variation>H</variation>
    <location>
        <position position="629"/>
    </location>
</feature>
<feature type="sequence variant" id="VAR_009384" description="In ALD." evidence="17">
    <original>E</original>
    <variation>G</variation>
    <location>
        <position position="630"/>
    </location>
</feature>
<feature type="sequence variant" id="VAR_009385" description="In ALD; dbSNP:rs2091773525." evidence="17">
    <original>C</original>
    <variation>Y</variation>
    <location>
        <position position="631"/>
    </location>
</feature>
<feature type="sequence variant" id="VAR_013357" description="In ALD; dbSNP:rs1064793877." evidence="17">
    <original>T</original>
    <variation>I</variation>
    <location>
        <position position="632"/>
    </location>
</feature>
<feature type="sequence variant" id="VAR_067244" description="In ALD." evidence="28">
    <original>T</original>
    <variation>P</variation>
    <location>
        <position position="632"/>
    </location>
</feature>
<feature type="sequence variant" id="VAR_013358" description="In ALD; asymptomatic." evidence="16">
    <original>S</original>
    <variation>I</variation>
    <location>
        <position position="633"/>
    </location>
</feature>
<feature type="sequence variant" id="VAR_009386" description="In ALD; dbSNP:rs202125585." evidence="12 28">
    <original>S</original>
    <variation>R</variation>
    <location>
        <position position="633"/>
    </location>
</feature>
<feature type="sequence variant" id="VAR_013359" description="In ALD; dbSNP:rs201427153." evidence="17">
    <original>V</original>
    <variation>M</variation>
    <location>
        <position position="635"/>
    </location>
</feature>
<feature type="sequence variant" id="VAR_009387" description="In ALD; dbSNP:rs2091773697." evidence="49">
    <original>S</original>
    <variation>I</variation>
    <location>
        <position position="636"/>
    </location>
</feature>
<feature type="sequence variant" id="VAR_009388" description="In ALD." evidence="9">
    <original>D</original>
    <variation>Y</variation>
    <location>
        <position position="638"/>
    </location>
</feature>
<feature type="sequence variant" id="VAR_067245" description="In ALD." evidence="28">
    <original>E</original>
    <variation>K</variation>
    <location>
        <position position="640"/>
    </location>
</feature>
<feature type="sequence variant" id="VAR_009389" description="In ALD." evidence="12">
    <original>A</original>
    <variation>P</variation>
    <location>
        <position position="646"/>
    </location>
</feature>
<feature type="sequence variant" id="VAR_009390" description="In ALD; dbSNP:rs2091774046." evidence="17">
    <original>L</original>
    <variation>P</variation>
    <location>
        <position position="654"/>
    </location>
</feature>
<feature type="sequence variant" id="VAR_000088" description="In ALD; CALD-type." evidence="7">
    <location>
        <position position="657"/>
    </location>
</feature>
<feature type="sequence variant" id="VAR_013360" description="In ALD; CALD-type." evidence="16">
    <original>R</original>
    <variation>P</variation>
    <location>
        <position position="660"/>
    </location>
</feature>
<feature type="sequence variant" id="VAR_067329" description="In ALD; dbSNP:rs1557055340." evidence="29 30">
    <original>R</original>
    <variation>Q</variation>
    <location>
        <position position="660"/>
    </location>
</feature>
<feature type="sequence variant" id="VAR_000089" description="In ALD; CALD, ALMD and AS-types; dbSNP:rs1569541203." evidence="6 26 37 38 39 41 47">
    <original>R</original>
    <variation>W</variation>
    <location>
        <position position="660"/>
    </location>
</feature>
<feature type="sequence variant" id="VAR_009391" description="In ALD; dbSNP:rs2091775068." evidence="17">
    <original>H</original>
    <variation>D</variation>
    <location>
        <position position="667"/>
    </location>
</feature>
<feature type="sequence variant" id="VAR_009392" description="In ALD; dbSNP:rs1557055398." evidence="17">
    <original>T</original>
    <variation>I</variation>
    <location>
        <position position="668"/>
    </location>
</feature>
<feature type="sequence variant" id="VAR_067246" description="In ALD." evidence="28">
    <original>G</original>
    <variation>D</variation>
    <location>
        <position position="677"/>
    </location>
</feature>
<feature type="sequence variant" id="VAR_000090" description="In ALD; AMN-type; dbSNP:rs1557055405." evidence="48">
    <original>W</original>
    <variation>R</variation>
    <location>
        <position position="679"/>
    </location>
</feature>
<feature type="sequence variant" id="VAR_009393" description="In ALD; dbSNP:rs782311214." evidence="17">
    <original>T</original>
    <variation>M</variation>
    <location>
        <position position="693"/>
    </location>
</feature>
<feature type="mutagenesis site" description="Does not affect PEX19 interaction." evidence="21">
    <original>M</original>
    <variation>P</variation>
    <location>
        <position position="67"/>
    </location>
</feature>
<feature type="mutagenesis site" description="Does not affect PEX19 interaction." evidence="21">
    <original>N</original>
    <variation>P</variation>
    <location>
        <position position="68"/>
    </location>
</feature>
<feature type="mutagenesis site" description="Does not affect PEX19 interaction." evidence="21">
    <original>R</original>
    <variation>P</variation>
    <location>
        <position position="69"/>
    </location>
</feature>
<feature type="mutagenesis site" description="Does not affect PEX19 interaction." evidence="21">
    <original>V</original>
    <variation>P</variation>
    <location>
        <position position="70"/>
    </location>
</feature>
<feature type="mutagenesis site" description="Does not affect PEX19 interaction." evidence="21">
    <original>F</original>
    <variation>P</variation>
    <location>
        <position position="71"/>
    </location>
</feature>
<feature type="mutagenesis site" description="Does not affect PEX19 interaction." evidence="21">
    <original>L</original>
    <variation>P</variation>
    <location>
        <position position="72"/>
    </location>
</feature>
<feature type="mutagenesis site" description="Does not affect PEX19 interaction." evidence="21">
    <original>Q</original>
    <variation>P</variation>
    <location>
        <position position="73"/>
    </location>
</feature>
<feature type="mutagenesis site" description="Does not affect PEX19 interaction." evidence="21">
    <original>R</original>
    <variation>P</variation>
    <location>
        <position position="74"/>
    </location>
</feature>
<feature type="mutagenesis site" description="Impairs PEX19 interaction." evidence="21">
    <original>L</original>
    <variation>P</variation>
    <location>
        <position position="75"/>
    </location>
</feature>
<feature type="mutagenesis site" description="Impairs PEX19 interaction." evidence="21">
    <original>L</original>
    <variation>P</variation>
    <location>
        <position position="76"/>
    </location>
</feature>
<feature type="mutagenesis site" description="Does not affect PEX19 interaction." evidence="21">
    <original>W</original>
    <variation>P</variation>
    <location>
        <position position="77"/>
    </location>
</feature>
<feature type="mutagenesis site" description="Impairs PEX19 interaction." evidence="21">
    <original>L</original>
    <variation>P</variation>
    <location>
        <position position="78"/>
    </location>
</feature>
<feature type="mutagenesis site" description="Impairs PEX19 interaction." evidence="21">
    <original>L</original>
    <variation>P</variation>
    <location>
        <position position="79"/>
    </location>
</feature>
<feature type="mutagenesis site" description="Does not affect PEX19 interaction." evidence="21">
    <original>R</original>
    <variation>P</variation>
    <location>
        <position position="80"/>
    </location>
</feature>
<feature type="mutagenesis site" description="Does not affect PEX19 interaction." evidence="21">
    <original>L</original>
    <variation>P</variation>
    <location>
        <position position="81"/>
    </location>
</feature>
<feature type="mutagenesis site" description="Does not affect PEX19 interaction." evidence="21">
    <original>L</original>
    <variation>P</variation>
    <location>
        <position position="82"/>
    </location>
</feature>
<feature type="mutagenesis site" description="Does not affect PEX19 interaction." evidence="21">
    <original>F</original>
    <variation>P</variation>
    <location>
        <position position="83"/>
    </location>
</feature>
<feature type="mutagenesis site" description="Does not affect ACOT activity. Transport activity of VLCFA is strongly reduced." evidence="36">
    <original>K</original>
    <variation>A</variation>
    <location>
        <position position="513"/>
    </location>
</feature>
<feature type="sequence conflict" description="In Ref. 1; CAA79922/CAA83230." evidence="54" ref="1">
    <original>V</original>
    <variation>A</variation>
    <location>
        <position position="123"/>
    </location>
</feature>
<feature type="strand" evidence="69">
    <location>
        <begin position="66"/>
        <end position="68"/>
    </location>
</feature>
<feature type="helix" evidence="69">
    <location>
        <begin position="69"/>
        <end position="82"/>
    </location>
</feature>
<feature type="strand" evidence="69">
    <location>
        <begin position="85"/>
        <end position="88"/>
    </location>
</feature>
<feature type="helix" evidence="69">
    <location>
        <begin position="89"/>
        <end position="111"/>
    </location>
</feature>
<feature type="strand" evidence="69">
    <location>
        <begin position="113"/>
        <end position="115"/>
    </location>
</feature>
<feature type="helix" evidence="69">
    <location>
        <begin position="116"/>
        <end position="119"/>
    </location>
</feature>
<feature type="strand" evidence="69">
    <location>
        <begin position="122"/>
        <end position="125"/>
    </location>
</feature>
<feature type="helix" evidence="69">
    <location>
        <begin position="127"/>
        <end position="137"/>
    </location>
</feature>
<feature type="turn" evidence="69">
    <location>
        <begin position="138"/>
        <end position="141"/>
    </location>
</feature>
<feature type="helix" evidence="69">
    <location>
        <begin position="142"/>
        <end position="174"/>
    </location>
</feature>
<feature type="strand" evidence="71">
    <location>
        <begin position="176"/>
        <end position="178"/>
    </location>
</feature>
<feature type="helix" evidence="69">
    <location>
        <begin position="179"/>
        <end position="185"/>
    </location>
</feature>
<feature type="strand" evidence="67">
    <location>
        <begin position="189"/>
        <end position="191"/>
    </location>
</feature>
<feature type="helix" evidence="69">
    <location>
        <begin position="193"/>
        <end position="214"/>
    </location>
</feature>
<feature type="helix" evidence="69">
    <location>
        <begin position="217"/>
        <end position="236"/>
    </location>
</feature>
<feature type="strand" evidence="65">
    <location>
        <begin position="237"/>
        <end position="239"/>
    </location>
</feature>
<feature type="helix" evidence="69">
    <location>
        <begin position="242"/>
        <end position="253"/>
    </location>
</feature>
<feature type="helix" evidence="69">
    <location>
        <begin position="256"/>
        <end position="259"/>
    </location>
</feature>
<feature type="turn" evidence="67">
    <location>
        <begin position="262"/>
        <end position="264"/>
    </location>
</feature>
<feature type="turn" evidence="69">
    <location>
        <begin position="265"/>
        <end position="267"/>
    </location>
</feature>
<feature type="helix" evidence="69">
    <location>
        <begin position="268"/>
        <end position="288"/>
    </location>
</feature>
<feature type="helix" evidence="69">
    <location>
        <begin position="290"/>
        <end position="296"/>
    </location>
</feature>
<feature type="helix" evidence="69">
    <location>
        <begin position="299"/>
        <end position="331"/>
    </location>
</feature>
<feature type="turn" evidence="69">
    <location>
        <begin position="332"/>
        <end position="339"/>
    </location>
</feature>
<feature type="helix" evidence="69">
    <location>
        <begin position="340"/>
        <end position="343"/>
    </location>
</feature>
<feature type="helix" evidence="70">
    <location>
        <begin position="344"/>
        <end position="352"/>
    </location>
</feature>
<feature type="turn" evidence="74">
    <location>
        <begin position="357"/>
        <end position="359"/>
    </location>
</feature>
<feature type="helix" evidence="70">
    <location>
        <begin position="363"/>
        <end position="369"/>
    </location>
</feature>
<feature type="helix" evidence="67">
    <location>
        <begin position="374"/>
        <end position="378"/>
    </location>
</feature>
<feature type="strand" evidence="73">
    <location>
        <begin position="379"/>
        <end position="381"/>
    </location>
</feature>
<feature type="helix" evidence="69">
    <location>
        <begin position="385"/>
        <end position="388"/>
    </location>
</feature>
<feature type="turn" evidence="69">
    <location>
        <begin position="389"/>
        <end position="391"/>
    </location>
</feature>
<feature type="helix" evidence="69">
    <location>
        <begin position="392"/>
        <end position="403"/>
    </location>
</feature>
<feature type="helix" evidence="69">
    <location>
        <begin position="406"/>
        <end position="429"/>
    </location>
</feature>
<feature type="turn" evidence="69">
    <location>
        <begin position="430"/>
        <end position="432"/>
    </location>
</feature>
<feature type="strand" evidence="69">
    <location>
        <begin position="466"/>
        <end position="469"/>
    </location>
</feature>
<feature type="strand" evidence="69">
    <location>
        <begin position="475"/>
        <end position="478"/>
    </location>
</feature>
<feature type="strand" evidence="71">
    <location>
        <begin position="484"/>
        <end position="486"/>
    </location>
</feature>
<feature type="strand" evidence="69">
    <location>
        <begin position="488"/>
        <end position="491"/>
    </location>
</feature>
<feature type="strand" evidence="72">
    <location>
        <begin position="494"/>
        <end position="497"/>
    </location>
</feature>
<feature type="strand" evidence="69">
    <location>
        <begin position="503"/>
        <end position="506"/>
    </location>
</feature>
<feature type="strand" evidence="66">
    <location>
        <begin position="511"/>
        <end position="513"/>
    </location>
</feature>
<feature type="helix" evidence="69">
    <location>
        <begin position="515"/>
        <end position="520"/>
    </location>
</feature>
<feature type="strand" evidence="66">
    <location>
        <begin position="522"/>
        <end position="524"/>
    </location>
</feature>
<feature type="strand" evidence="69">
    <location>
        <begin position="528"/>
        <end position="533"/>
    </location>
</feature>
<feature type="helix" evidence="69">
    <location>
        <begin position="536"/>
        <end position="538"/>
    </location>
</feature>
<feature type="strand" evidence="69">
    <location>
        <begin position="539"/>
        <end position="542"/>
    </location>
</feature>
<feature type="strand" evidence="71">
    <location>
        <begin position="550"/>
        <end position="552"/>
    </location>
</feature>
<feature type="helix" evidence="69">
    <location>
        <begin position="553"/>
        <end position="557"/>
    </location>
</feature>
<feature type="turn" evidence="69">
    <location>
        <begin position="558"/>
        <end position="560"/>
    </location>
</feature>
<feature type="helix" evidence="69">
    <location>
        <begin position="563"/>
        <end position="568"/>
    </location>
</feature>
<feature type="helix" evidence="69">
    <location>
        <begin position="575"/>
        <end position="582"/>
    </location>
</feature>
<feature type="helix" evidence="69">
    <location>
        <begin position="586"/>
        <end position="589"/>
    </location>
</feature>
<feature type="turn" evidence="67">
    <location>
        <begin position="591"/>
        <end position="593"/>
    </location>
</feature>
<feature type="helix" evidence="69">
    <location>
        <begin position="594"/>
        <end position="596"/>
    </location>
</feature>
<feature type="helix" evidence="69">
    <location>
        <begin position="601"/>
        <end position="604"/>
    </location>
</feature>
<feature type="turn" evidence="69">
    <location>
        <begin position="607"/>
        <end position="610"/>
    </location>
</feature>
<feature type="helix" evidence="69">
    <location>
        <begin position="611"/>
        <end position="621"/>
    </location>
</feature>
<feature type="strand" evidence="69">
    <location>
        <begin position="624"/>
        <end position="630"/>
    </location>
</feature>
<feature type="turn" evidence="69">
    <location>
        <begin position="631"/>
        <end position="634"/>
    </location>
</feature>
<feature type="helix" evidence="69">
    <location>
        <begin position="637"/>
        <end position="649"/>
    </location>
</feature>
<feature type="strand" evidence="69">
    <location>
        <begin position="653"/>
        <end position="657"/>
    </location>
</feature>
<feature type="helix" evidence="69">
    <location>
        <begin position="664"/>
        <end position="666"/>
    </location>
</feature>
<feature type="strand" evidence="69">
    <location>
        <begin position="668"/>
        <end position="673"/>
    </location>
</feature>
<feature type="strand" evidence="69">
    <location>
        <begin position="675"/>
        <end position="677"/>
    </location>
</feature>
<feature type="strand" evidence="69">
    <location>
        <begin position="679"/>
        <end position="683"/>
    </location>
</feature>
<feature type="helix" evidence="68">
    <location>
        <begin position="686"/>
        <end position="688"/>
    </location>
</feature>
<feature type="helix" evidence="70">
    <location>
        <begin position="691"/>
        <end position="699"/>
    </location>
</feature>
<feature type="strand" evidence="70">
    <location>
        <begin position="700"/>
        <end position="702"/>
    </location>
</feature>
<feature type="strand" evidence="70">
    <location>
        <begin position="704"/>
        <end position="706"/>
    </location>
</feature>
<feature type="helix" evidence="70">
    <location>
        <begin position="709"/>
        <end position="719"/>
    </location>
</feature>
<protein>
    <recommendedName>
        <fullName evidence="62">ATP-binding cassette sub-family D member 1</fullName>
        <ecNumber evidence="35 36">3.1.2.-</ecNumber>
        <ecNumber evidence="15 35 36 56 59">7.6.2.-</ecNumber>
    </recommendedName>
    <alternativeName>
        <fullName evidence="51">Adrenoleukodystrophy protein</fullName>
        <shortName evidence="52 53">ALDP</shortName>
    </alternativeName>
</protein>
<reference key="1">
    <citation type="journal article" date="1993" name="Nature">
        <title>Putative X-linked adrenoleukodystrophy gene shares unexpected homology with ABC transporters.</title>
        <authorList>
            <person name="Mosser J."/>
            <person name="Douar A.-M."/>
            <person name="Sarde C.-O."/>
            <person name="Kioschis P."/>
            <person name="Feil R."/>
            <person name="Moser H."/>
            <person name="Poustka A.-M."/>
            <person name="Mandel J.-L."/>
            <person name="Aubourg P."/>
        </authorList>
    </citation>
    <scope>NUCLEOTIDE SEQUENCE [GENOMIC DNA / MRNA]</scope>
</reference>
<reference key="2">
    <citation type="journal article" date="2005" name="Nature">
        <title>The DNA sequence of the human X chromosome.</title>
        <authorList>
            <person name="Ross M.T."/>
            <person name="Grafham D.V."/>
            <person name="Coffey A.J."/>
            <person name="Scherer S."/>
            <person name="McLay K."/>
            <person name="Muzny D."/>
            <person name="Platzer M."/>
            <person name="Howell G.R."/>
            <person name="Burrows C."/>
            <person name="Bird C.P."/>
            <person name="Frankish A."/>
            <person name="Lovell F.L."/>
            <person name="Howe K.L."/>
            <person name="Ashurst J.L."/>
            <person name="Fulton R.S."/>
            <person name="Sudbrak R."/>
            <person name="Wen G."/>
            <person name="Jones M.C."/>
            <person name="Hurles M.E."/>
            <person name="Andrews T.D."/>
            <person name="Scott C.E."/>
            <person name="Searle S."/>
            <person name="Ramser J."/>
            <person name="Whittaker A."/>
            <person name="Deadman R."/>
            <person name="Carter N.P."/>
            <person name="Hunt S.E."/>
            <person name="Chen R."/>
            <person name="Cree A."/>
            <person name="Gunaratne P."/>
            <person name="Havlak P."/>
            <person name="Hodgson A."/>
            <person name="Metzker M.L."/>
            <person name="Richards S."/>
            <person name="Scott G."/>
            <person name="Steffen D."/>
            <person name="Sodergren E."/>
            <person name="Wheeler D.A."/>
            <person name="Worley K.C."/>
            <person name="Ainscough R."/>
            <person name="Ambrose K.D."/>
            <person name="Ansari-Lari M.A."/>
            <person name="Aradhya S."/>
            <person name="Ashwell R.I."/>
            <person name="Babbage A.K."/>
            <person name="Bagguley C.L."/>
            <person name="Ballabio A."/>
            <person name="Banerjee R."/>
            <person name="Barker G.E."/>
            <person name="Barlow K.F."/>
            <person name="Barrett I.P."/>
            <person name="Bates K.N."/>
            <person name="Beare D.M."/>
            <person name="Beasley H."/>
            <person name="Beasley O."/>
            <person name="Beck A."/>
            <person name="Bethel G."/>
            <person name="Blechschmidt K."/>
            <person name="Brady N."/>
            <person name="Bray-Allen S."/>
            <person name="Bridgeman A.M."/>
            <person name="Brown A.J."/>
            <person name="Brown M.J."/>
            <person name="Bonnin D."/>
            <person name="Bruford E.A."/>
            <person name="Buhay C."/>
            <person name="Burch P."/>
            <person name="Burford D."/>
            <person name="Burgess J."/>
            <person name="Burrill W."/>
            <person name="Burton J."/>
            <person name="Bye J.M."/>
            <person name="Carder C."/>
            <person name="Carrel L."/>
            <person name="Chako J."/>
            <person name="Chapman J.C."/>
            <person name="Chavez D."/>
            <person name="Chen E."/>
            <person name="Chen G."/>
            <person name="Chen Y."/>
            <person name="Chen Z."/>
            <person name="Chinault C."/>
            <person name="Ciccodicola A."/>
            <person name="Clark S.Y."/>
            <person name="Clarke G."/>
            <person name="Clee C.M."/>
            <person name="Clegg S."/>
            <person name="Clerc-Blankenburg K."/>
            <person name="Clifford K."/>
            <person name="Cobley V."/>
            <person name="Cole C.G."/>
            <person name="Conquer J.S."/>
            <person name="Corby N."/>
            <person name="Connor R.E."/>
            <person name="David R."/>
            <person name="Davies J."/>
            <person name="Davis C."/>
            <person name="Davis J."/>
            <person name="Delgado O."/>
            <person name="Deshazo D."/>
            <person name="Dhami P."/>
            <person name="Ding Y."/>
            <person name="Dinh H."/>
            <person name="Dodsworth S."/>
            <person name="Draper H."/>
            <person name="Dugan-Rocha S."/>
            <person name="Dunham A."/>
            <person name="Dunn M."/>
            <person name="Durbin K.J."/>
            <person name="Dutta I."/>
            <person name="Eades T."/>
            <person name="Ellwood M."/>
            <person name="Emery-Cohen A."/>
            <person name="Errington H."/>
            <person name="Evans K.L."/>
            <person name="Faulkner L."/>
            <person name="Francis F."/>
            <person name="Frankland J."/>
            <person name="Fraser A.E."/>
            <person name="Galgoczy P."/>
            <person name="Gilbert J."/>
            <person name="Gill R."/>
            <person name="Gloeckner G."/>
            <person name="Gregory S.G."/>
            <person name="Gribble S."/>
            <person name="Griffiths C."/>
            <person name="Grocock R."/>
            <person name="Gu Y."/>
            <person name="Gwilliam R."/>
            <person name="Hamilton C."/>
            <person name="Hart E.A."/>
            <person name="Hawes A."/>
            <person name="Heath P.D."/>
            <person name="Heitmann K."/>
            <person name="Hennig S."/>
            <person name="Hernandez J."/>
            <person name="Hinzmann B."/>
            <person name="Ho S."/>
            <person name="Hoffs M."/>
            <person name="Howden P.J."/>
            <person name="Huckle E.J."/>
            <person name="Hume J."/>
            <person name="Hunt P.J."/>
            <person name="Hunt A.R."/>
            <person name="Isherwood J."/>
            <person name="Jacob L."/>
            <person name="Johnson D."/>
            <person name="Jones S."/>
            <person name="de Jong P.J."/>
            <person name="Joseph S.S."/>
            <person name="Keenan S."/>
            <person name="Kelly S."/>
            <person name="Kershaw J.K."/>
            <person name="Khan Z."/>
            <person name="Kioschis P."/>
            <person name="Klages S."/>
            <person name="Knights A.J."/>
            <person name="Kosiura A."/>
            <person name="Kovar-Smith C."/>
            <person name="Laird G.K."/>
            <person name="Langford C."/>
            <person name="Lawlor S."/>
            <person name="Leversha M."/>
            <person name="Lewis L."/>
            <person name="Liu W."/>
            <person name="Lloyd C."/>
            <person name="Lloyd D.M."/>
            <person name="Loulseged H."/>
            <person name="Loveland J.E."/>
            <person name="Lovell J.D."/>
            <person name="Lozado R."/>
            <person name="Lu J."/>
            <person name="Lyne R."/>
            <person name="Ma J."/>
            <person name="Maheshwari M."/>
            <person name="Matthews L.H."/>
            <person name="McDowall J."/>
            <person name="McLaren S."/>
            <person name="McMurray A."/>
            <person name="Meidl P."/>
            <person name="Meitinger T."/>
            <person name="Milne S."/>
            <person name="Miner G."/>
            <person name="Mistry S.L."/>
            <person name="Morgan M."/>
            <person name="Morris S."/>
            <person name="Mueller I."/>
            <person name="Mullikin J.C."/>
            <person name="Nguyen N."/>
            <person name="Nordsiek G."/>
            <person name="Nyakatura G."/>
            <person name="O'dell C.N."/>
            <person name="Okwuonu G."/>
            <person name="Palmer S."/>
            <person name="Pandian R."/>
            <person name="Parker D."/>
            <person name="Parrish J."/>
            <person name="Pasternak S."/>
            <person name="Patel D."/>
            <person name="Pearce A.V."/>
            <person name="Pearson D.M."/>
            <person name="Pelan S.E."/>
            <person name="Perez L."/>
            <person name="Porter K.M."/>
            <person name="Ramsey Y."/>
            <person name="Reichwald K."/>
            <person name="Rhodes S."/>
            <person name="Ridler K.A."/>
            <person name="Schlessinger D."/>
            <person name="Schueler M.G."/>
            <person name="Sehra H.K."/>
            <person name="Shaw-Smith C."/>
            <person name="Shen H."/>
            <person name="Sheridan E.M."/>
            <person name="Shownkeen R."/>
            <person name="Skuce C.D."/>
            <person name="Smith M.L."/>
            <person name="Sotheran E.C."/>
            <person name="Steingruber H.E."/>
            <person name="Steward C.A."/>
            <person name="Storey R."/>
            <person name="Swann R.M."/>
            <person name="Swarbreck D."/>
            <person name="Tabor P.E."/>
            <person name="Taudien S."/>
            <person name="Taylor T."/>
            <person name="Teague B."/>
            <person name="Thomas K."/>
            <person name="Thorpe A."/>
            <person name="Timms K."/>
            <person name="Tracey A."/>
            <person name="Trevanion S."/>
            <person name="Tromans A.C."/>
            <person name="d'Urso M."/>
            <person name="Verduzco D."/>
            <person name="Villasana D."/>
            <person name="Waldron L."/>
            <person name="Wall M."/>
            <person name="Wang Q."/>
            <person name="Warren J."/>
            <person name="Warry G.L."/>
            <person name="Wei X."/>
            <person name="West A."/>
            <person name="Whitehead S.L."/>
            <person name="Whiteley M.N."/>
            <person name="Wilkinson J.E."/>
            <person name="Willey D.L."/>
            <person name="Williams G."/>
            <person name="Williams L."/>
            <person name="Williamson A."/>
            <person name="Williamson H."/>
            <person name="Wilming L."/>
            <person name="Woodmansey R.L."/>
            <person name="Wray P.W."/>
            <person name="Yen J."/>
            <person name="Zhang J."/>
            <person name="Zhou J."/>
            <person name="Zoghbi H."/>
            <person name="Zorilla S."/>
            <person name="Buck D."/>
            <person name="Reinhardt R."/>
            <person name="Poustka A."/>
            <person name="Rosenthal A."/>
            <person name="Lehrach H."/>
            <person name="Meindl A."/>
            <person name="Minx P.J."/>
            <person name="Hillier L.W."/>
            <person name="Willard H.F."/>
            <person name="Wilson R.K."/>
            <person name="Waterston R.H."/>
            <person name="Rice C.M."/>
            <person name="Vaudin M."/>
            <person name="Coulson A."/>
            <person name="Nelson D.L."/>
            <person name="Weinstock G."/>
            <person name="Sulston J.E."/>
            <person name="Durbin R.M."/>
            <person name="Hubbard T."/>
            <person name="Gibbs R.A."/>
            <person name="Beck S."/>
            <person name="Rogers J."/>
            <person name="Bentley D.R."/>
        </authorList>
    </citation>
    <scope>NUCLEOTIDE SEQUENCE [LARGE SCALE GENOMIC DNA]</scope>
</reference>
<reference key="3">
    <citation type="journal article" date="2004" name="Genome Res.">
        <title>The status, quality, and expansion of the NIH full-length cDNA project: the Mammalian Gene Collection (MGC).</title>
        <authorList>
            <consortium name="The MGC Project Team"/>
        </authorList>
    </citation>
    <scope>NUCLEOTIDE SEQUENCE [LARGE SCALE MRNA]</scope>
    <source>
        <tissue>Pancreas</tissue>
    </source>
</reference>
<reference key="4">
    <citation type="journal article" date="1999" name="J. Biol. Chem.">
        <title>Homo- and heterodimerization of peroxisomal ATP-binding cassette half-transporters.</title>
        <authorList>
            <person name="Liu L.X."/>
            <person name="Janvier K."/>
            <person name="Berteaux-Lecellier V."/>
            <person name="Cartier N."/>
            <person name="Benarous R."/>
            <person name="Aubourg P."/>
        </authorList>
    </citation>
    <scope>SUBUNIT</scope>
    <scope>CHARACTERIZATION OF VARIANTS ALD HIS-389; GLN-401; ARG-484 AND GLN-591</scope>
</reference>
<reference key="5">
    <citation type="journal article" date="2001" name="FEBS Lett.">
        <title>Characterization and functional analysis of the nucleotide binding fold in human peroxisomal ATP binding cassette transporters.</title>
        <authorList>
            <person name="Roerig P."/>
            <person name="Mayerhofer P."/>
            <person name="Holzinger A."/>
            <person name="Gaertner J."/>
        </authorList>
    </citation>
    <scope>FUNCTION</scope>
    <scope>CATALYTIC ACTIVITY</scope>
    <scope>CHARACTERIZATION OF VARIANTS ALD SER-512 AND LEU-606</scope>
</reference>
<reference key="6">
    <citation type="journal article" date="2000" name="Biochem. Biophys. Res. Commun.">
        <title>Human adrenoleukodystrophy protein and related peroxisomal ABC transporters interact with the peroxisomal assembly protein PEX19p.</title>
        <authorList>
            <person name="Gloeckner C.J."/>
            <person name="Mayerhofer P.U."/>
            <person name="Landgraf P."/>
            <person name="Muntau A.C."/>
            <person name="Holzinger A."/>
            <person name="Gerber J.-K."/>
            <person name="Kammerer S."/>
            <person name="Adamski J."/>
            <person name="Roscher A.A."/>
        </authorList>
    </citation>
    <scope>INTERACTION WITH PEX19</scope>
    <scope>SUBCELLULAR LOCATION</scope>
    <scope>REGION</scope>
    <source>
        <tissue>Brain</tissue>
    </source>
</reference>
<reference key="7">
    <citation type="journal article" date="2000" name="J. Cell Biol.">
        <title>PEX19 binds multiple peroxisomal membrane proteins, is predominantly cytoplasmic, and is required for peroxisome membrane synthesis.</title>
        <authorList>
            <person name="Sacksteder K.A."/>
            <person name="Jones J.M."/>
            <person name="South S.T."/>
            <person name="Li X."/>
            <person name="Liu Y."/>
            <person name="Gould S.J."/>
        </authorList>
    </citation>
    <scope>INTERACTION WITH PEX19</scope>
</reference>
<reference key="8">
    <citation type="journal article" date="2005" name="FEBS Lett.">
        <title>X-linked adrenoleukodystrophy mice demonstrate abnormalities in cholesterol metabolism.</title>
        <authorList>
            <person name="Weinhofer I."/>
            <person name="Forss-Petter S."/>
            <person name="Kunze M."/>
            <person name="Zigman M."/>
            <person name="Berger J."/>
        </authorList>
    </citation>
    <scope>INDUCTION</scope>
</reference>
<reference key="9">
    <citation type="journal article" date="2005" name="J. Biol. Chem.">
        <title>Function of the PEX19-binding site of human adrenoleukodystrophy protein as targeting motif in man and yeast. PMP targeting is evolutionarily conserved.</title>
        <authorList>
            <person name="Halbach A."/>
            <person name="Lorenzen S."/>
            <person name="Landgraf C."/>
            <person name="Volkmer-Engert R."/>
            <person name="Erdmann R."/>
            <person name="Rottensteiner H."/>
        </authorList>
    </citation>
    <scope>REGION</scope>
    <scope>MUTAGENESIS OF MET-67; ASN-68; ARG-69; VAL-70; PHE-71; LEU-72; GLN-73; ARG-74; LEU-75; LEU-76; TRP-77; LEU-78; LEU-79; ARG-80; LEU-81; LEU-82 AND PHE-83</scope>
</reference>
<reference key="10">
    <citation type="journal article" date="2005" name="J. Hum. Genet.">
        <title>Probing substrate-induced conformational alterations in adrenoleukodystrophy protein by proteolysis.</title>
        <authorList>
            <person name="Guimaraes C.P."/>
            <person name="Sa-Miranda C."/>
            <person name="Azevedo J.E."/>
        </authorList>
    </citation>
    <scope>FUNCTION</scope>
    <scope>DOMAIN</scope>
</reference>
<reference key="11">
    <citation type="journal article" date="2006" name="Biol. Pharm. Bull.">
        <title>ATP-binding and -hydrolysis activities of ALDP (ABCD1) and ALDRP (ABCD2), human peroxisomal ABC proteins, overexpressed in Sf21 cells.</title>
        <authorList>
            <person name="Morita M."/>
            <person name="Kurisu M."/>
            <person name="Kashiwayama Y."/>
            <person name="Yokota S."/>
            <person name="Imanaka T."/>
        </authorList>
    </citation>
    <scope>FUNCTION</scope>
    <scope>CATALYTIC ACTIVITY</scope>
    <scope>SUBCELLULAR LOCATION</scope>
</reference>
<reference key="12">
    <citation type="journal article" date="2007" name="J. Biol. Chem.">
        <title>Live cell FRET microscopy: homo- and heterodimerization of two human peroxisomal ABC transporters, the adrenoleukodystrophy protein (ALDP, ABCD1) and PMP70 (ABCD3).</title>
        <authorList>
            <person name="Hillebrand M."/>
            <person name="Verrier S.E."/>
            <person name="Ohlenbusch A."/>
            <person name="Schaefer A."/>
            <person name="Soeling H.D."/>
            <person name="Wouters F.S."/>
            <person name="Gaertner J."/>
        </authorList>
    </citation>
    <scope>INTERACTION WITH ABCD3</scope>
    <scope>SUBUNIT</scope>
    <scope>SUBCELLULAR LOCATION</scope>
    <scope>REGION</scope>
</reference>
<reference key="13">
    <citation type="journal article" date="2008" name="FASEB J.">
        <title>The human peroxisomal ABC half transporter ALDP functions as a homodimer and accepts acyl-CoA esters.</title>
        <authorList>
            <person name="van Roermund C.W."/>
            <person name="Visser W.F."/>
            <person name="Ijlst L."/>
            <person name="van Cruchten A."/>
            <person name="Boek M."/>
            <person name="Kulik W."/>
            <person name="Waterham H.R."/>
            <person name="Wanders R.J."/>
        </authorList>
    </citation>
    <scope>FUNCTION</scope>
    <scope>SUBUNIT</scope>
    <scope>SUBCELLULAR LOCATION</scope>
</reference>
<reference key="14">
    <citation type="journal article" date="2011" name="Biochim. Biophys. Acta">
        <title>Differential substrate specificities of human ABCD1 and ABCD2 in peroxisomal fatty acid beta-oxidation.</title>
        <authorList>
            <person name="van Roermund C.W."/>
            <person name="Visser W.F."/>
            <person name="Ijlst L."/>
            <person name="Waterham H.R."/>
            <person name="Wanders R.J."/>
        </authorList>
    </citation>
    <scope>FUNCTION</scope>
    <scope>SUBSTRATE SPECIFICITY</scope>
</reference>
<reference key="15">
    <citation type="journal article" date="2013" name="J. Biol. Chem.">
        <title>Impaired very long-chain acyl-CoA beta-oxidation in human X-linked adrenoleukodystrophy fibroblasts is a direct consequence of ABCD1 transporter dysfunction.</title>
        <authorList>
            <person name="Wiesinger C."/>
            <person name="Kunze M."/>
            <person name="Regelsberger G."/>
            <person name="Forss-Petter S."/>
            <person name="Berger J."/>
        </authorList>
    </citation>
    <scope>FUNCTION</scope>
    <scope>CATALYTIC ACTIVITY</scope>
</reference>
<reference key="16">
    <citation type="journal article" date="2008" name="Mol. Cell">
        <title>Kinase-selective enrichment enables quantitative phosphoproteomics of the kinome across the cell cycle.</title>
        <authorList>
            <person name="Daub H."/>
            <person name="Olsen J.V."/>
            <person name="Bairlein M."/>
            <person name="Gnad F."/>
            <person name="Oppermann F.S."/>
            <person name="Korner R."/>
            <person name="Greff Z."/>
            <person name="Keri G."/>
            <person name="Stemmann O."/>
            <person name="Mann M."/>
        </authorList>
    </citation>
    <scope>PHOSPHORYLATION [LARGE SCALE ANALYSIS] AT SER-733</scope>
    <scope>IDENTIFICATION BY MASS SPECTROMETRY [LARGE SCALE ANALYSIS]</scope>
    <source>
        <tissue>Cervix carcinoma</tissue>
    </source>
</reference>
<reference key="17">
    <citation type="journal article" date="2008" name="Proc. Natl. Acad. Sci. U.S.A.">
        <title>A quantitative atlas of mitotic phosphorylation.</title>
        <authorList>
            <person name="Dephoure N."/>
            <person name="Zhou C."/>
            <person name="Villen J."/>
            <person name="Beausoleil S.A."/>
            <person name="Bakalarski C.E."/>
            <person name="Elledge S.J."/>
            <person name="Gygi S.P."/>
        </authorList>
    </citation>
    <scope>PHOSPHORYLATION [LARGE SCALE ANALYSIS] AT SER-733</scope>
    <scope>IDENTIFICATION BY MASS SPECTROMETRY [LARGE SCALE ANALYSIS]</scope>
    <source>
        <tissue>Cervix carcinoma</tissue>
    </source>
</reference>
<reference key="18">
    <citation type="journal article" date="2011" name="BMC Syst. Biol.">
        <title>Initial characterization of the human central proteome.</title>
        <authorList>
            <person name="Burkard T.R."/>
            <person name="Planyavsky M."/>
            <person name="Kaupe I."/>
            <person name="Breitwieser F.P."/>
            <person name="Buerckstuemmer T."/>
            <person name="Bennett K.L."/>
            <person name="Superti-Furga G."/>
            <person name="Colinge J."/>
        </authorList>
    </citation>
    <scope>IDENTIFICATION BY MASS SPECTROMETRY [LARGE SCALE ANALYSIS]</scope>
</reference>
<reference key="19">
    <citation type="journal article" date="2014" name="J. Proteomics">
        <title>An enzyme assisted RP-RPLC approach for in-depth analysis of human liver phosphoproteome.</title>
        <authorList>
            <person name="Bian Y."/>
            <person name="Song C."/>
            <person name="Cheng K."/>
            <person name="Dong M."/>
            <person name="Wang F."/>
            <person name="Huang J."/>
            <person name="Sun D."/>
            <person name="Wang L."/>
            <person name="Ye M."/>
            <person name="Zou H."/>
        </authorList>
    </citation>
    <scope>IDENTIFICATION BY MASS SPECTROMETRY [LARGE SCALE ANALYSIS]</scope>
    <source>
        <tissue>Liver</tissue>
    </source>
</reference>
<reference key="20">
    <citation type="journal article" date="2015" name="Proteomics">
        <title>N-terminome analysis of the human mitochondrial proteome.</title>
        <authorList>
            <person name="Vaca Jacome A.S."/>
            <person name="Rabilloud T."/>
            <person name="Schaeffer-Reiss C."/>
            <person name="Rompais M."/>
            <person name="Ayoub D."/>
            <person name="Lane L."/>
            <person name="Bairoch A."/>
            <person name="Van Dorsselaer A."/>
            <person name="Carapito C."/>
        </authorList>
    </citation>
    <scope>IDENTIFICATION BY MASS SPECTROMETRY [LARGE SCALE ANALYSIS]</scope>
</reference>
<reference key="21">
    <citation type="journal article" date="2018" name="Biochem. Biophys. Res. Commun.">
        <title>Characterization of human ATP-binding cassette protein subfamily D reconstituted into proteoliposomes.</title>
        <authorList>
            <person name="Okamoto T."/>
            <person name="Kawaguchi K."/>
            <person name="Watanabe S."/>
            <person name="Agustina R."/>
            <person name="Ikejima T."/>
            <person name="Ikeda K."/>
            <person name="Nakano M."/>
            <person name="Morita M."/>
            <person name="Imanaka T."/>
        </authorList>
    </citation>
    <scope>FUNCTION</scope>
    <scope>CATALYTIC ACTIVITY</scope>
    <scope>SUBCELLULAR LOCATION</scope>
</reference>
<reference key="22">
    <citation type="journal article" date="2021" name="Sci. Rep.">
        <title>Acyl-CoA thioesterase activity of peroxisomal ABC protein ABCD1 is required for the transport of very long-chain acyl-CoA into peroxisomes.</title>
        <authorList>
            <person name="Kawaguchi K."/>
            <person name="Mukai E."/>
            <person name="Watanabe S."/>
            <person name="Yamashita A."/>
            <person name="Morita M."/>
            <person name="So T."/>
            <person name="Imanaka T."/>
        </authorList>
    </citation>
    <scope>CATALYTIC ACTIVITY</scope>
    <scope>FUNCTION</scope>
    <scope>ACTIVITY REGULATION</scope>
    <scope>MUTAGENESIS OF LYS-513</scope>
</reference>
<reference key="23">
    <citation type="journal article" date="1993" name="Hum. Mol. Genet.">
        <title>Abnormal messenger RNA expression and a missense mutation in patients with X-linked adrenoleukodystrophy.</title>
        <authorList>
            <person name="Cartier N."/>
            <person name="Sarde C.-O."/>
            <person name="Douar A.-M."/>
            <person name="Mosser J."/>
            <person name="Mandel J.-L."/>
            <person name="Aubourg P."/>
        </authorList>
    </citation>
    <scope>VARIANT ALD LYS-291</scope>
</reference>
<reference key="24">
    <citation type="journal article" date="1994" name="Hum. Mol. Genet.">
        <title>Missense mutations are frequent in the gene for X-chromosomal adrenoleukodystrophy (ALD).</title>
        <authorList>
            <person name="Fuchs S."/>
            <person name="Sarde C.-O."/>
            <person name="Wedemann H."/>
            <person name="Schwinger E."/>
            <person name="Mandel J.-L."/>
            <person name="Gal A."/>
        </authorList>
    </citation>
    <scope>VARIANTS ALD SER-148; ASP-174; ARG-266; GLN-401; TRP-418 AND PHE-515</scope>
</reference>
<reference key="25">
    <citation type="journal article" date="1994" name="J. Clin. Invest.">
        <title>Identification of mutations in the putative ATP-binding domain of the adrenoleukodystrophy gene.</title>
        <authorList>
            <person name="Fanen P."/>
            <person name="Guidoux S."/>
            <person name="Sarde C.-O."/>
            <person name="Mandel J.-L."/>
            <person name="Goossens M."/>
            <person name="Aubourg P."/>
        </authorList>
    </citation>
    <scope>VARIANTS ALD TRP-518; LEU-606; CYS-617 AND HIS-617</scope>
</reference>
<reference key="26">
    <citation type="journal article" date="1995" name="Am. J. Hum. Genet.">
        <title>Spectrum of mutations in the gene encoding the adrenoleukodystrophy protein.</title>
        <authorList>
            <person name="Ligtenberg M.J.L."/>
            <person name="Kemp S."/>
            <person name="Sarde C.-O."/>
            <person name="van Geel B.M."/>
            <person name="Kleijer W.J."/>
            <person name="Barth P.G."/>
            <person name="Mandel J.-L."/>
            <person name="van Oost B.A."/>
            <person name="Bolhuis P.A."/>
        </authorList>
    </citation>
    <scope>VARIANTS ALD CYS-104; ASN-149; PRO-152; HIS-163; HIS-194; PRO-220; ARG-266; HIS-389; GLY-609; LYS-609; CYS-617 AND TRP-660</scope>
</reference>
<reference key="27">
    <citation type="journal article" date="1995" name="Am. J. Hum. Genet.">
        <title>Mutations in the gene for X-linked adrenoleukodystrophy in patients with different clinical phenotypes.</title>
        <authorList>
            <person name="Braun A."/>
            <person name="Ambach H."/>
            <person name="Kammerer S."/>
            <person name="Rolinski B."/>
            <person name="Stoeckler S."/>
            <person name="Rabl W."/>
            <person name="Gaertner J."/>
            <person name="Zierz S."/>
            <person name="Roscher A.A."/>
        </authorList>
    </citation>
    <scope>VARIANTS ALD HIS-104; GLU-178; GLY-528 DEL AND LEU-560</scope>
</reference>
<reference key="28">
    <citation type="journal article" date="1995" name="Am. J. Hum. Genet.">
        <title>Altered expression of ALDP in X-linked adrenoleukodystrophy.</title>
        <authorList>
            <person name="Watkins P.A."/>
            <person name="Gould S.J."/>
            <person name="Smith M.A."/>
            <person name="Braiterman L.T."/>
            <person name="Wei H.M."/>
            <person name="Kok F."/>
            <person name="Moser A.B."/>
            <person name="Moser H.W."/>
            <person name="Smith K.D."/>
        </authorList>
    </citation>
    <scope>VARIANTS ALD GLU-276; ASP-291; GLU-291 DEL; PRO-342; HIS-389; GLN-401; GLN-591; LEU-606; HIS-617; THR-626; HIS-629 AND TRP-660</scope>
</reference>
<reference key="29">
    <citation type="journal article" date="1995" name="Hum. Genet.">
        <title>De novo missense mutation Y174S in exon 1 of the adrenoleukodystrophy (ALD) gene.</title>
        <authorList>
            <person name="Barcelo A."/>
            <person name="Giros M."/>
            <person name="Sarde C.O."/>
            <person name="Pintos G."/>
            <person name="Mandel J.L."/>
            <person name="Pampols T."/>
            <person name="Estivill X."/>
        </authorList>
    </citation>
    <scope>VARIANT ALD SER-174</scope>
</reference>
<reference key="30">
    <citation type="journal article" date="1995" name="Hum. Mutat.">
        <title>Mutational analysis of patients with X-linked adrenoleukodystrophy.</title>
        <authorList>
            <person name="Kok F."/>
            <person name="Neumann S."/>
            <person name="Sarde C.-O."/>
            <person name="Zheng S."/>
            <person name="Wu K.-H."/>
            <person name="Wei H.-M."/>
            <person name="Bergin J."/>
            <person name="Watkins P.A."/>
            <person name="Gould S."/>
            <person name="Sack G."/>
            <person name="Moser H."/>
            <person name="Mandel J.-L."/>
            <person name="Smith K.D."/>
        </authorList>
    </citation>
    <scope>VARIANTS ALD CYS-104; THR-141; PRO-182; TRP-277; HIS-389; SER-512; LYS-566; LEU-606; HIS-617 AND TRP-660</scope>
</reference>
<reference key="31">
    <citation type="journal article" date="1995" name="J. Neurol. Sci.">
        <title>Molecular analysis of X-linked adrenoleukodystrophy patients.</title>
        <authorList>
            <person name="Yasutake T."/>
            <person name="Yamada T."/>
            <person name="Furuya H."/>
            <person name="Shinnoh N."/>
            <person name="Goto I."/>
            <person name="Kobayashi T."/>
        </authorList>
    </citation>
    <scope>VARIANTS ALD SER-512; LEU-534 AND TRP-660</scope>
</reference>
<reference key="32">
    <citation type="journal article" date="1996" name="Am. J. Hum. Genet.">
        <title>Mutational and protein analysis of patients and heterozygous women with X-linked adrenoleukodystrophy.</title>
        <authorList>
            <person name="Feigenbaum V."/>
            <person name="Lombard-Platet G."/>
            <person name="Guidoux S."/>
            <person name="Sarde C.-O."/>
            <person name="Mandel J.-L."/>
            <person name="Aubourg P."/>
        </authorList>
    </citation>
    <scope>VARIANTS ALD LEU-98; ILE-105; TRP-108; ARG-116; SER-148; VAL-200; GLY-221; LEU-263; THR-294; SER-512; TRP-518; TRP-522; ARG-560; PRO-606 AND TRP-660</scope>
</reference>
<reference key="33">
    <citation type="journal article" date="1996" name="Hum. Genet.">
        <title>Identification of mutations in the ALD-gene of 20 families with adrenoleukodystrophy/adrenomyeloneuropathy.</title>
        <authorList>
            <person name="Krasemann E.W."/>
            <person name="Meier V."/>
            <person name="Korenke G.C."/>
            <person name="Hunneman D.H."/>
            <person name="Hanefeld F."/>
        </authorList>
    </citation>
    <scope>VARIANTS ALD PRO-107; ASP-174; PRO-211; MET-254; ARG-277; GLY-389; GLN-401; TRP-418; LYS-609; CYS-617 AND GLY-617</scope>
</reference>
<reference key="34">
    <citation type="journal article" date="1998" name="Hum. Mutat. Suppl.">
        <title>First missense mutation (W679R) in exon 10 of the adrenoleukodystrophy gene in siblings with adrenomyeloneuropathy.</title>
        <authorList>
            <person name="Korenke G.C."/>
            <person name="Krasemann E."/>
            <person name="Meier V."/>
            <person name="Beuche W."/>
            <person name="Hunneman D.H."/>
            <person name="Hanefeld F."/>
        </authorList>
    </citation>
    <scope>VARIANT ALD ARG-679</scope>
</reference>
<reference key="35">
    <citation type="journal article" date="1998" name="J. Inherit. Metab. Dis.">
        <title>A novel mutation found in an adrenoleukodystrophy patient who underwent bone marrow transplantation.</title>
        <authorList>
            <person name="Osaka H."/>
            <person name="Sekiguchi H."/>
            <person name="Inoue K."/>
            <person name="Ikuta K."/>
            <person name="Sakakihara Y."/>
            <person name="Oka A."/>
            <person name="Onishi H."/>
            <person name="Miyakawa T."/>
            <person name="Suzuki K."/>
            <person name="Kimura S."/>
            <person name="Kosaka K."/>
            <person name="Matsuyama S."/>
        </authorList>
    </citation>
    <scope>VARIANT ALD PRO-322</scope>
</reference>
<reference key="36">
    <citation type="journal article" date="1998" name="Neuropediatrics">
        <title>Clinical and genetic aspects of X-linked adrenoleukodystrophy.</title>
        <authorList>
            <person name="Gaertner J."/>
            <person name="Braun A."/>
            <person name="Holzinger A."/>
            <person name="Roerig P."/>
            <person name="Lenard H.G."/>
            <person name="Roscher A.A."/>
        </authorList>
    </citation>
    <scope>VARIANTS ALD CYS-213 AND ILE-636</scope>
    <scope>REVIEW</scope>
</reference>
<reference key="37">
    <citation type="journal article" date="1999" name="Arch. Neurol.">
        <title>Mutational analysis and genotype-phenotype correlation of 29 unrelated Japanese patients with X-linked adrenoleukodystrophy.</title>
        <authorList>
            <person name="Takano H."/>
            <person name="Koike R."/>
            <person name="Onodera O."/>
            <person name="Sasaki R."/>
            <person name="Tsuji S."/>
        </authorList>
    </citation>
    <scope>VARIANTS ALD SER-148; ASN-200; ASP-214; ARG-266; LYS-271; CYS-296; TRP-401; VAL-507; GLN-518; SER-540; ARG-544; TRP-591; LEU-606 AND TRP-660</scope>
</reference>
<reference key="38">
    <citation type="journal article" date="1999" name="Hum. Genet.">
        <title>X-linked adrenomyeloneuropathy associated with 14 novel ALD-gene mutations: no correlation between type of mutation and age of onset.</title>
        <authorList>
            <person name="Wichers M."/>
            <person name="Kohler W."/>
            <person name="Brennemann W."/>
            <person name="Boese V."/>
            <person name="Sokolowski P."/>
            <person name="Bidlingmaier F."/>
            <person name="Ludwig M."/>
        </authorList>
    </citation>
    <scope>VARIANTS ALD PRO-105; SER-143; SER-148; PRO-190; ASP-298; ARG-339; SER-529 AND TYR-638</scope>
</reference>
<reference key="39">
    <citation type="journal article" date="1999" name="Mol. Cell. Probes">
        <title>Two novel missense mutations causing adrenoleukodystrophy in Italian patients.</title>
        <authorList>
            <person name="Perusi C."/>
            <person name="Gomez-Lira M."/>
            <person name="Mottes M."/>
            <person name="Pignatti P.F."/>
            <person name="Bertini E."/>
            <person name="Cappa M."/>
            <person name="Vigliani M.C."/>
            <person name="Schiffer D."/>
            <person name="Rizzuto N."/>
            <person name="Salviati A."/>
        </authorList>
    </citation>
    <scope>VARIANTS ALD LEU-108 AND SER-143</scope>
</reference>
<reference key="40">
    <citation type="journal article" date="1999" name="Neurochem. Res.">
        <title>X-linked adrenoleukodystrophy: genes, mutations, and phenotypes.</title>
        <authorList>
            <person name="Smith K.D."/>
            <person name="Kemp S."/>
            <person name="Braiterman L.T."/>
            <person name="Lu J.F."/>
            <person name="Wei H.M."/>
            <person name="Geraghty M."/>
            <person name="Stetten G."/>
            <person name="Bergin J.S."/>
            <person name="Pevsner J."/>
            <person name="Watkins P.A."/>
        </authorList>
    </citation>
    <scope>VARIANT ALD PRO-552</scope>
    <scope>REVIEW</scope>
</reference>
<reference key="41">
    <citation type="journal article" date="2000" name="Hum. Mutat.">
        <title>Determination of 30 X-linked adrenoleukodystrophy mutations, including 15 not previously described.</title>
        <authorList>
            <person name="Lachtermacher M.B."/>
            <person name="Seuanez H.N."/>
            <person name="Moser A.B."/>
            <person name="Moser H.W."/>
            <person name="Smith K.D."/>
        </authorList>
    </citation>
    <scope>VARIANTS ALD ARG-103; ARG-116; SER-152; CYS-174; TRP-189; THR-218; PRO-229; ASP-298; GLN-401; TRP-401; TRP-418; LEU-543; HIS-554; VAL-616; ARG-633 AND PRO-646</scope>
</reference>
<reference key="42">
    <citation type="journal article" date="2000" name="Hum. Mutat.">
        <title>Detection of mutations in the ALD gene (ABCD1) in seven Italian families: description of four novel mutations.</title>
        <authorList>
            <person name="Lira M.G."/>
            <person name="Mottes M."/>
            <person name="Pignatti P.F."/>
            <person name="Medica I."/>
            <person name="Uziel G."/>
            <person name="Cappa M."/>
            <person name="Bertini E."/>
            <person name="Rizzuto N."/>
            <person name="Salviati A."/>
        </authorList>
    </citation>
    <scope>VARIANTS ALD GLN-401; TRP-418; LEU-543 AND ARG-556</scope>
</reference>
<reference key="43">
    <citation type="journal article" date="2001" name="Hum. Genet.">
        <title>Characterisation of two mutations in the ABCD1 gene leading to low levels of normal ALDP.</title>
        <authorList>
            <person name="Guimaraes C.P."/>
            <person name="Lemos M."/>
            <person name="Menezes I."/>
            <person name="Coelho T."/>
            <person name="Sa-Miranda C."/>
            <person name="Azevedo J.E."/>
        </authorList>
    </citation>
    <scope>VARIANT ALD VAL-GLY-GLN-300 INS</scope>
</reference>
<reference key="44">
    <citation type="journal article" date="2001" name="Hum. Mutat.">
        <title>Eight novel ABCD1 gene mutations and three polymorphisms in patients with X-linked adrenoleukodystrophy: the first polymorphism causing an amino acid exchange.</title>
        <authorList>
            <person name="Dvorakova L."/>
            <person name="Storkanova G."/>
            <person name="Unterrainer G."/>
            <person name="Hujova J."/>
            <person name="Kmoch S."/>
            <person name="Zeman J."/>
            <person name="Hrebicek M."/>
            <person name="Berger J."/>
        </authorList>
    </citation>
    <scope>VARIANTS ALD LEU-98; ASP-99; GLU-217; GLN-518; ASP-608; ILE-633 AND PRO-660</scope>
    <scope>VARIANT THR-13</scope>
    <scope>CHARACTERIZATION OF VARIANT ALD GLU-217</scope>
    <scope>CHARACTERIZATION OF VARIANT THR-13</scope>
</reference>
<reference key="45">
    <citation type="journal article" date="2001" name="Hum. Mutat.">
        <title>ABCD1 mutations and the X-linked adrenoleukodystrophy mutation database: role in diagnosis and clinical correlations.</title>
        <authorList>
            <person name="Kemp S."/>
            <person name="Pujol A."/>
            <person name="Waterham H.R."/>
            <person name="van Geel B.M."/>
            <person name="Boehm C.D."/>
            <person name="Raymond G.V."/>
            <person name="Cutting G.R."/>
            <person name="Wanders R.J."/>
            <person name="Moser H.W."/>
        </authorList>
    </citation>
    <scope>VARIANTS ALD LYS-90; CYS-113; PRO-113; LEU-152; PRO-161; PRO-163; LYS-198; GLU-224; TRP-274; CYS-280; PRO-285; MET-336; ASP-343; SER-560; PRO-591; ASP-626; GLY-630; TYR-631; ILE-632; MET-635; PRO-654; ASP-667; ILE-668 AND MET-693</scope>
</reference>
<reference key="46">
    <citation type="journal article" date="2002" name="Am. J. Hum. Genet.">
        <title>Contiguous deletion of the X-linked adrenoleukodystrophy gene (ABCD1) and DXS1357E: a novel neonatal phenotype similar to peroxisomal biogenesis disorders.</title>
        <authorList>
            <person name="Corzo D."/>
            <person name="Gibson W."/>
            <person name="Johnson K."/>
            <person name="Mitchell G."/>
            <person name="LePage G."/>
            <person name="Cox G.F."/>
            <person name="Casey R."/>
            <person name="Zeiss C."/>
            <person name="Tyson H."/>
            <person name="Cutting G.R."/>
            <person name="Raymond G.V."/>
            <person name="Smith K.D."/>
            <person name="Watkins P.A."/>
            <person name="Moser A.B."/>
            <person name="Moser H.W."/>
            <person name="Steinberg S.J."/>
        </authorList>
    </citation>
    <scope>INVOLVEMENT IN CONTIGUOUS ABCD1/DXS1375E DELETION SYNDROME</scope>
</reference>
<reference key="47">
    <citation type="journal article" date="2005" name="Hum. Mutat.">
        <title>Identification of seven novel mutations in ABCD1 by a DHPLC-based assay in Italian patients with X-linked adrenoleukodystrophy.</title>
        <authorList>
            <person name="Montagna G."/>
            <person name="Di Biase A."/>
            <person name="Cappa M."/>
            <person name="Melone M.A.B."/>
            <person name="Piantadosi C."/>
            <person name="Colabianchi D."/>
            <person name="Patrono C."/>
            <person name="Attori L."/>
            <person name="Cannelli N."/>
            <person name="Cotrufo R."/>
            <person name="Salvati S."/>
            <person name="Santorelli F.M."/>
        </authorList>
    </citation>
    <scope>RETRACTED PAPER</scope>
</reference>
<reference key="48">
    <citation type="journal article" date="2020" name="Hum. Mutat.">
        <authorList>
            <person name="Montagna G."/>
            <person name="Di Biase A."/>
            <person name="Cappa M."/>
            <person name="Melone M.A.B."/>
            <person name="Piantadosi C."/>
            <person name="Colabianchi D."/>
            <person name="Patrono C."/>
            <person name="Attori L."/>
            <person name="Cannelli N."/>
            <person name="Cotrufo R."/>
            <person name="Salvati S."/>
            <person name="Santorelli F.M."/>
        </authorList>
    </citation>
    <scope>RETRACTION NOTICE OF PUBMED:15643618</scope>
</reference>
<reference key="49">
    <citation type="journal article" date="2011" name="Clin. Chim. Acta">
        <title>Molecular analysis of ABCD1 gene in Indian patients with X-linked adrenoleukodystrophy.</title>
        <authorList>
            <person name="Shukla P."/>
            <person name="Gupta N."/>
            <person name="Gulati S."/>
            <person name="Ghosh M."/>
            <person name="Vasisht S."/>
            <person name="Sharma R."/>
            <person name="Gupta A.K."/>
            <person name="Kalra V."/>
            <person name="Kabra M."/>
        </authorList>
    </citation>
    <scope>VARIANTS ALD GLN-401; PRO-516; LEU-560; PRO-606 AND GLN-660</scope>
</reference>
<reference key="50">
    <citation type="journal article" date="2011" name="Mol. Genet. Metab.">
        <title>X-linked adrenoleukodystrophy: ABCD1 de novo mutations and mosaicism.</title>
        <authorList>
            <person name="Wang Y."/>
            <person name="Busin R."/>
            <person name="Reeves C."/>
            <person name="Bezman L."/>
            <person name="Raymond G."/>
            <person name="Toomer C.J."/>
            <person name="Watkins P.A."/>
            <person name="Snowden A."/>
            <person name="Moser A."/>
            <person name="Naidu S."/>
            <person name="Bibat G."/>
            <person name="Hewson S."/>
            <person name="Tam K."/>
            <person name="Clarke J.T."/>
            <person name="Charnas L."/>
            <person name="Stetten G."/>
            <person name="Karczeski B."/>
            <person name="Cutting G."/>
            <person name="Steinberg S."/>
        </authorList>
    </citation>
    <scope>VARIANTS ALD LEU-139 DEL; ARG-198; ARG-266; GLU-266; TRP-401; GLN-518; PHE-523; CYS-540; LEU-560; PRO-606; HIS-617; THR-626; PRO-632; ARG-633; LYS-640 AND ASP-677</scope>
</reference>
<reference key="51">
    <citation type="journal article" date="2011" name="Neurogenetics">
        <title>Identification of novel SNPs of ABCD1, ABCD2, ABCD3, and ABCD4 genes in patients with X-linked adrenoleukodystrophy (ALD) based on comprehensive resequencing and association studies with ALD phenotypes.</title>
        <authorList>
            <person name="Matsukawa T."/>
            <person name="Asheuer M."/>
            <person name="Takahashi Y."/>
            <person name="Goto J."/>
            <person name="Suzuki Y."/>
            <person name="Shimozawa N."/>
            <person name="Takano H."/>
            <person name="Onodera O."/>
            <person name="Nishizawa M."/>
            <person name="Aubourg P."/>
            <person name="Tsuji S."/>
        </authorList>
    </citation>
    <scope>VARIANTS ALD LEU-108; SER-148; ASP-214; PRO-254; ARG-266; LYS-271; ARG-277; TRP-401; GLN-518; TRP-518; SER-540; ARG-544; LEU-560; LYS-609 AND TRP-660</scope>
</reference>
<reference key="52">
    <citation type="journal article" date="2011" name="PLoS ONE">
        <title>Genomic profiling identifies novel mutations and SNPs in ABCD1 gene: a molecular, biochemical and clinical analysis of X-ALD cases in India.</title>
        <authorList>
            <person name="Kumar N."/>
            <person name="Taneja K.K."/>
            <person name="Kalra V."/>
            <person name="Behari M."/>
            <person name="Aneja S."/>
            <person name="Bansal S.K."/>
        </authorList>
    </citation>
    <scope>VARIANTS ALD ARG-266; LYS-302; GLN-401; TRP-591; PRO-606; LYS-609 AND GLN-660</scope>
</reference>
<reference key="53">
    <citation type="journal article" date="2013" name="Neurodegener. Dis.">
        <title>Molecular characterization of X-linked adrenoleukodystrophy in a Tunisian family: identification of a novel missense mutation in the ABCD1 gene.</title>
        <authorList>
            <person name="Kallabi F."/>
            <person name="Hadj Salem I."/>
            <person name="Ben Salah G."/>
            <person name="Ben Turkia H."/>
            <person name="Ben Chehida A."/>
            <person name="Tebib N."/>
            <person name="Fakhfakh F."/>
            <person name="Kamoun H."/>
        </authorList>
    </citation>
    <scope>VARIANT ALD ASP-95</scope>
</reference>
<reference key="54">
    <citation type="journal article" date="2015" name="Clin. Chim. Acta">
        <title>Phenotypic variability in a Tunisian family with X-linked adrenoleukodystrophy caused by the p.Gln316Pro novel mutation.</title>
        <authorList>
            <person name="Kallabi F."/>
            <person name="Ellouz E."/>
            <person name="Tabebi M."/>
            <person name="Ben Salah G."/>
            <person name="Kaabechi N."/>
            <person name="Keskes L."/>
            <person name="Triki C."/>
            <person name="Kamoun H."/>
        </authorList>
    </citation>
    <scope>VARIANT ALD PRO-316</scope>
</reference>
<reference key="55">
    <citation type="journal article" date="2017" name="Neuroendocrinol. Lett.">
        <title>A first case of adrenomyeloneuropathy with mutation Y174S of the adrenoleukodystrophy gene.</title>
        <authorList>
            <person name="Horikawa Y."/>
            <person name="Enya M."/>
            <person name="Yoshikura N."/>
            <person name="Kitagawa J."/>
            <person name="Takashima S."/>
            <person name="Shimozawa N."/>
            <person name="Takeda J."/>
        </authorList>
    </citation>
    <scope>VARIANT ALD SER-174</scope>
</reference>